<organism>
    <name type="scientific">Saccharomyces cerevisiae (strain ATCC 204508 / S288c)</name>
    <name type="common">Baker's yeast</name>
    <dbReference type="NCBI Taxonomy" id="559292"/>
    <lineage>
        <taxon>Eukaryota</taxon>
        <taxon>Fungi</taxon>
        <taxon>Dikarya</taxon>
        <taxon>Ascomycota</taxon>
        <taxon>Saccharomycotina</taxon>
        <taxon>Saccharomycetes</taxon>
        <taxon>Saccharomycetales</taxon>
        <taxon>Saccharomycetaceae</taxon>
        <taxon>Saccharomyces</taxon>
    </lineage>
</organism>
<sequence>MSREGFQIPTNLDAAAAGTSQARTATLKYICAECSSKLSLSRTDAVRCKDCGHRILLKARTKRLVQFEAR</sequence>
<evidence type="ECO:0000269" key="1">
    <source>
    </source>
</evidence>
<evidence type="ECO:0000269" key="2">
    <source>
    </source>
</evidence>
<evidence type="ECO:0000269" key="3">
    <source>
    </source>
</evidence>
<evidence type="ECO:0000269" key="4">
    <source>
    </source>
</evidence>
<evidence type="ECO:0000269" key="5">
    <source>
    </source>
</evidence>
<evidence type="ECO:0000269" key="6">
    <source>
    </source>
</evidence>
<evidence type="ECO:0000269" key="7">
    <source>
    </source>
</evidence>
<evidence type="ECO:0000269" key="8">
    <source>
    </source>
</evidence>
<evidence type="ECO:0000269" key="9">
    <source>
    </source>
</evidence>
<evidence type="ECO:0000269" key="10">
    <source>
    </source>
</evidence>
<evidence type="ECO:0000305" key="11"/>
<evidence type="ECO:0007829" key="12">
    <source>
        <dbReference type="PDB" id="1TWF"/>
    </source>
</evidence>
<evidence type="ECO:0007829" key="13">
    <source>
        <dbReference type="PDB" id="3S1Q"/>
    </source>
</evidence>
<evidence type="ECO:0007829" key="14">
    <source>
        <dbReference type="PDB" id="6RUI"/>
    </source>
</evidence>
<evidence type="ECO:0007829" key="15">
    <source>
        <dbReference type="PDB" id="7Z31"/>
    </source>
</evidence>
<evidence type="ECO:0007829" key="16">
    <source>
        <dbReference type="PDB" id="8JCH"/>
    </source>
</evidence>
<proteinExistence type="evidence at protein level"/>
<protein>
    <recommendedName>
        <fullName>DNA-directed RNA polymerases I, II, and III subunit RPABC4</fullName>
        <shortName>RNA polymerases I, II, and III subunit ABC4</shortName>
    </recommendedName>
    <alternativeName>
        <fullName>ABC10-alpha</fullName>
    </alternativeName>
</protein>
<comment type="function">
    <text evidence="7 8 9">DNA-dependent RNA polymerases catalyze the transcription of DNA into RNA using the four ribonucleoside triphosphates as substrates. Common component of RNA polymerases I, II and III which synthesize ribosomal RNA precursors, mRNA precursors and many functional non-coding RNAs, and a small RNAs, such as 5S rRNA and tRNAs, respectively. RNA polymerases are composed of mobile elements that move relative to each other. In Pol II, the core element with the central large cleft comprises RPB3, RBP10, RPB11, RPB12 and regions of RPB1 and RPB2 forming the active center.</text>
</comment>
<comment type="subunit">
    <text evidence="1 2 3 6 7 8 9">Component of the RNA polymerase I (Pol I), RNA polymerase II (Pol II) and RNA polymerase III (Pol III) complexes. Component of the RNA polymerase I (Pol I) complex consisting of 14 subunits: RPA135, RPA190, RPC40, RPA14, RPB5, RPO26, RPA43, RPB8, RPA12, RPB10, RPC19, RPC10, RPA49 and RPA34. The complex is composed of a horseshoe-shaped core containing ten subunits (RPA135, RPA190, RPB5, RPO26, RPB8, RPB10, RPC10, RPA12, RPC19 and RPC40) where RPA135 and RPA190 form the DNA-binding cleft. Outside of the core, RPA14 and RPA43 form the stalk that mediates interactions with transcription initiation factors and newly synthesized RNA. Component of the RNA polymerase II (Pol II) complex consisting of 12 subunits: RPO21, RPB2, RPB3, RPB4, RPB5, RPO26, RPB7, RPB8, RPB9, RPB10 and RPC10. Component of the RNA polymerase III (Pol III) complex consisting of 17 subunits. Interacts, via its C-terminus, with TFIIIC subunit TFC4.</text>
</comment>
<comment type="subcellular location">
    <subcellularLocation>
        <location evidence="4">Nucleus</location>
        <location evidence="4">Nucleolus</location>
    </subcellularLocation>
    <subcellularLocation>
        <location evidence="10">Peroxisome</location>
    </subcellularLocation>
    <text evidence="10">Peroxisomal localization is dependent on PEX5.</text>
</comment>
<comment type="PTM">
    <text>The N-terminus is blocked.</text>
</comment>
<comment type="miscellaneous">
    <text evidence="5">Present with 907 molecules/cell in log phase SD medium.</text>
</comment>
<comment type="similarity">
    <text evidence="11">Belongs to the archaeal Rpo12/eukaryotic RPC10 RNA polymerase subunit family.</text>
</comment>
<gene>
    <name type="primary">RPC10</name>
    <name type="synonym">RPB12</name>
    <name type="ordered locus">YHR143W-A</name>
    <name type="ORF">YHR143BW</name>
</gene>
<keyword id="KW-0002">3D-structure</keyword>
<keyword id="KW-0903">Direct protein sequencing</keyword>
<keyword id="KW-0240">DNA-directed RNA polymerase</keyword>
<keyword id="KW-0479">Metal-binding</keyword>
<keyword id="KW-0539">Nucleus</keyword>
<keyword id="KW-0576">Peroxisome</keyword>
<keyword id="KW-1185">Reference proteome</keyword>
<keyword id="KW-0690">Ribosome biogenesis</keyword>
<keyword id="KW-0804">Transcription</keyword>
<keyword id="KW-0862">Zinc</keyword>
<keyword id="KW-0863">Zinc-finger</keyword>
<accession>P40422</accession>
<accession>D3DL93</accession>
<dbReference type="EMBL" id="U23378">
    <property type="protein sequence ID" value="AAA64417.1"/>
    <property type="molecule type" value="Genomic_DNA"/>
</dbReference>
<dbReference type="EMBL" id="U10397">
    <property type="protein sequence ID" value="AAB68994.1"/>
    <property type="molecule type" value="Genomic_DNA"/>
</dbReference>
<dbReference type="EMBL" id="AY558549">
    <property type="protein sequence ID" value="AAS56875.1"/>
    <property type="molecule type" value="Genomic_DNA"/>
</dbReference>
<dbReference type="EMBL" id="BK006934">
    <property type="protein sequence ID" value="DAA06837.1"/>
    <property type="molecule type" value="Genomic_DNA"/>
</dbReference>
<dbReference type="PIR" id="S58932">
    <property type="entry name" value="S58932"/>
</dbReference>
<dbReference type="RefSeq" id="NP_012013.1">
    <property type="nucleotide sequence ID" value="NM_001179273.1"/>
</dbReference>
<dbReference type="PDB" id="1I3Q">
    <property type="method" value="X-ray"/>
    <property type="resolution" value="3.10 A"/>
    <property type="chains" value="L=1-70"/>
</dbReference>
<dbReference type="PDB" id="1I50">
    <property type="method" value="X-ray"/>
    <property type="resolution" value="2.80 A"/>
    <property type="chains" value="L=1-70"/>
</dbReference>
<dbReference type="PDB" id="1I6H">
    <property type="method" value="X-ray"/>
    <property type="resolution" value="3.30 A"/>
    <property type="chains" value="L=1-70"/>
</dbReference>
<dbReference type="PDB" id="1K83">
    <property type="method" value="X-ray"/>
    <property type="resolution" value="2.80 A"/>
    <property type="chains" value="L=1-70"/>
</dbReference>
<dbReference type="PDB" id="1NIK">
    <property type="method" value="X-ray"/>
    <property type="resolution" value="4.10 A"/>
    <property type="chains" value="L=1-70"/>
</dbReference>
<dbReference type="PDB" id="1NT9">
    <property type="method" value="X-ray"/>
    <property type="resolution" value="4.20 A"/>
    <property type="chains" value="L=1-70"/>
</dbReference>
<dbReference type="PDB" id="1PQV">
    <property type="method" value="X-ray"/>
    <property type="resolution" value="3.80 A"/>
    <property type="chains" value="L=1-70"/>
</dbReference>
<dbReference type="PDB" id="1R5U">
    <property type="method" value="X-ray"/>
    <property type="resolution" value="4.50 A"/>
    <property type="chains" value="L=1-70"/>
</dbReference>
<dbReference type="PDB" id="1R9S">
    <property type="method" value="X-ray"/>
    <property type="resolution" value="4.25 A"/>
    <property type="chains" value="L=1-70"/>
</dbReference>
<dbReference type="PDB" id="1R9T">
    <property type="method" value="X-ray"/>
    <property type="resolution" value="3.50 A"/>
    <property type="chains" value="L=1-70"/>
</dbReference>
<dbReference type="PDB" id="1SFO">
    <property type="method" value="X-ray"/>
    <property type="resolution" value="3.61 A"/>
    <property type="chains" value="L=1-70"/>
</dbReference>
<dbReference type="PDB" id="1TWA">
    <property type="method" value="X-ray"/>
    <property type="resolution" value="3.20 A"/>
    <property type="chains" value="L=1-70"/>
</dbReference>
<dbReference type="PDB" id="1TWC">
    <property type="method" value="X-ray"/>
    <property type="resolution" value="3.00 A"/>
    <property type="chains" value="L=1-70"/>
</dbReference>
<dbReference type="PDB" id="1TWF">
    <property type="method" value="X-ray"/>
    <property type="resolution" value="2.30 A"/>
    <property type="chains" value="L=1-70"/>
</dbReference>
<dbReference type="PDB" id="1TWG">
    <property type="method" value="X-ray"/>
    <property type="resolution" value="3.30 A"/>
    <property type="chains" value="L=1-70"/>
</dbReference>
<dbReference type="PDB" id="1TWH">
    <property type="method" value="X-ray"/>
    <property type="resolution" value="3.40 A"/>
    <property type="chains" value="L=1-70"/>
</dbReference>
<dbReference type="PDB" id="1WCM">
    <property type="method" value="X-ray"/>
    <property type="resolution" value="3.80 A"/>
    <property type="chains" value="L=1-70"/>
</dbReference>
<dbReference type="PDB" id="1Y1V">
    <property type="method" value="X-ray"/>
    <property type="resolution" value="3.80 A"/>
    <property type="chains" value="L=1-70"/>
</dbReference>
<dbReference type="PDB" id="1Y1W">
    <property type="method" value="X-ray"/>
    <property type="resolution" value="4.00 A"/>
    <property type="chains" value="L=1-70"/>
</dbReference>
<dbReference type="PDB" id="1Y1Y">
    <property type="method" value="X-ray"/>
    <property type="resolution" value="4.00 A"/>
    <property type="chains" value="L=1-70"/>
</dbReference>
<dbReference type="PDB" id="1Y77">
    <property type="method" value="X-ray"/>
    <property type="resolution" value="4.50 A"/>
    <property type="chains" value="L=1-70"/>
</dbReference>
<dbReference type="PDB" id="2B63">
    <property type="method" value="X-ray"/>
    <property type="resolution" value="3.80 A"/>
    <property type="chains" value="L=1-70"/>
</dbReference>
<dbReference type="PDB" id="2B8K">
    <property type="method" value="X-ray"/>
    <property type="resolution" value="4.15 A"/>
    <property type="chains" value="L=1-70"/>
</dbReference>
<dbReference type="PDB" id="2E2H">
    <property type="method" value="X-ray"/>
    <property type="resolution" value="3.95 A"/>
    <property type="chains" value="L=1-70"/>
</dbReference>
<dbReference type="PDB" id="2E2I">
    <property type="method" value="X-ray"/>
    <property type="resolution" value="3.41 A"/>
    <property type="chains" value="L=1-70"/>
</dbReference>
<dbReference type="PDB" id="2E2J">
    <property type="method" value="X-ray"/>
    <property type="resolution" value="3.50 A"/>
    <property type="chains" value="L=1-70"/>
</dbReference>
<dbReference type="PDB" id="2JA5">
    <property type="method" value="X-ray"/>
    <property type="resolution" value="3.80 A"/>
    <property type="chains" value="L=1-70"/>
</dbReference>
<dbReference type="PDB" id="2JA6">
    <property type="method" value="X-ray"/>
    <property type="resolution" value="4.00 A"/>
    <property type="chains" value="L=1-70"/>
</dbReference>
<dbReference type="PDB" id="2JA7">
    <property type="method" value="X-ray"/>
    <property type="resolution" value="3.80 A"/>
    <property type="chains" value="L/X=1-70"/>
</dbReference>
<dbReference type="PDB" id="2JA8">
    <property type="method" value="X-ray"/>
    <property type="resolution" value="3.80 A"/>
    <property type="chains" value="L=1-70"/>
</dbReference>
<dbReference type="PDB" id="2NVQ">
    <property type="method" value="X-ray"/>
    <property type="resolution" value="2.90 A"/>
    <property type="chains" value="L=1-70"/>
</dbReference>
<dbReference type="PDB" id="2NVT">
    <property type="method" value="X-ray"/>
    <property type="resolution" value="3.36 A"/>
    <property type="chains" value="L=1-70"/>
</dbReference>
<dbReference type="PDB" id="2NVX">
    <property type="method" value="X-ray"/>
    <property type="resolution" value="3.60 A"/>
    <property type="chains" value="L=1-70"/>
</dbReference>
<dbReference type="PDB" id="2NVY">
    <property type="method" value="X-ray"/>
    <property type="resolution" value="3.40 A"/>
    <property type="chains" value="L=1-70"/>
</dbReference>
<dbReference type="PDB" id="2NVZ">
    <property type="method" value="X-ray"/>
    <property type="resolution" value="4.30 A"/>
    <property type="chains" value="L=1-70"/>
</dbReference>
<dbReference type="PDB" id="2R7Z">
    <property type="method" value="X-ray"/>
    <property type="resolution" value="3.80 A"/>
    <property type="chains" value="L=1-70"/>
</dbReference>
<dbReference type="PDB" id="2R92">
    <property type="method" value="X-ray"/>
    <property type="resolution" value="3.80 A"/>
    <property type="chains" value="L=1-70"/>
</dbReference>
<dbReference type="PDB" id="2R93">
    <property type="method" value="X-ray"/>
    <property type="resolution" value="4.00 A"/>
    <property type="chains" value="L=1-70"/>
</dbReference>
<dbReference type="PDB" id="2VUM">
    <property type="method" value="X-ray"/>
    <property type="resolution" value="3.40 A"/>
    <property type="chains" value="L=1-70"/>
</dbReference>
<dbReference type="PDB" id="2YU9">
    <property type="method" value="X-ray"/>
    <property type="resolution" value="3.40 A"/>
    <property type="chains" value="L=1-70"/>
</dbReference>
<dbReference type="PDB" id="3CQZ">
    <property type="method" value="X-ray"/>
    <property type="resolution" value="2.80 A"/>
    <property type="chains" value="L=1-70"/>
</dbReference>
<dbReference type="PDB" id="3FKI">
    <property type="method" value="X-ray"/>
    <property type="resolution" value="3.88 A"/>
    <property type="chains" value="L=1-70"/>
</dbReference>
<dbReference type="PDB" id="3GTG">
    <property type="method" value="X-ray"/>
    <property type="resolution" value="3.78 A"/>
    <property type="chains" value="L=1-70"/>
</dbReference>
<dbReference type="PDB" id="3GTJ">
    <property type="method" value="X-ray"/>
    <property type="resolution" value="3.42 A"/>
    <property type="chains" value="L=1-70"/>
</dbReference>
<dbReference type="PDB" id="3GTK">
    <property type="method" value="X-ray"/>
    <property type="resolution" value="3.80 A"/>
    <property type="chains" value="L=1-70"/>
</dbReference>
<dbReference type="PDB" id="3GTL">
    <property type="method" value="X-ray"/>
    <property type="resolution" value="3.38 A"/>
    <property type="chains" value="L=1-70"/>
</dbReference>
<dbReference type="PDB" id="3GTM">
    <property type="method" value="X-ray"/>
    <property type="resolution" value="3.80 A"/>
    <property type="chains" value="L=1-70"/>
</dbReference>
<dbReference type="PDB" id="3GTO">
    <property type="method" value="X-ray"/>
    <property type="resolution" value="4.00 A"/>
    <property type="chains" value="L=1-70"/>
</dbReference>
<dbReference type="PDB" id="3GTP">
    <property type="method" value="X-ray"/>
    <property type="resolution" value="3.90 A"/>
    <property type="chains" value="L=1-70"/>
</dbReference>
<dbReference type="PDB" id="3GTQ">
    <property type="method" value="X-ray"/>
    <property type="resolution" value="3.80 A"/>
    <property type="chains" value="L=1-70"/>
</dbReference>
<dbReference type="PDB" id="3H3V">
    <property type="method" value="X-ray"/>
    <property type="resolution" value="4.00 A"/>
    <property type="chains" value="M=1-70"/>
</dbReference>
<dbReference type="PDB" id="3HOU">
    <property type="method" value="X-ray"/>
    <property type="resolution" value="3.20 A"/>
    <property type="chains" value="L/X=1-70"/>
</dbReference>
<dbReference type="PDB" id="3HOV">
    <property type="method" value="X-ray"/>
    <property type="resolution" value="3.50 A"/>
    <property type="chains" value="L=1-70"/>
</dbReference>
<dbReference type="PDB" id="3HOW">
    <property type="method" value="X-ray"/>
    <property type="resolution" value="3.60 A"/>
    <property type="chains" value="L=1-70"/>
</dbReference>
<dbReference type="PDB" id="3HOX">
    <property type="method" value="X-ray"/>
    <property type="resolution" value="3.65 A"/>
    <property type="chains" value="L=1-70"/>
</dbReference>
<dbReference type="PDB" id="3HOY">
    <property type="method" value="X-ray"/>
    <property type="resolution" value="3.40 A"/>
    <property type="chains" value="L=1-70"/>
</dbReference>
<dbReference type="PDB" id="3HOZ">
    <property type="method" value="X-ray"/>
    <property type="resolution" value="3.65 A"/>
    <property type="chains" value="L=1-70"/>
</dbReference>
<dbReference type="PDB" id="3I4M">
    <property type="method" value="X-ray"/>
    <property type="resolution" value="3.70 A"/>
    <property type="chains" value="L=1-70"/>
</dbReference>
<dbReference type="PDB" id="3I4N">
    <property type="method" value="X-ray"/>
    <property type="resolution" value="3.90 A"/>
    <property type="chains" value="L=1-70"/>
</dbReference>
<dbReference type="PDB" id="3J1N">
    <property type="method" value="EM"/>
    <property type="resolution" value="16.00 A"/>
    <property type="chains" value="L=1-70"/>
</dbReference>
<dbReference type="PDB" id="3K1F">
    <property type="method" value="X-ray"/>
    <property type="resolution" value="4.30 A"/>
    <property type="chains" value="L=1-70"/>
</dbReference>
<dbReference type="PDB" id="3K7A">
    <property type="method" value="X-ray"/>
    <property type="resolution" value="3.80 A"/>
    <property type="chains" value="L=1-70"/>
</dbReference>
<dbReference type="PDB" id="3M3Y">
    <property type="method" value="X-ray"/>
    <property type="resolution" value="3.18 A"/>
    <property type="chains" value="L=1-70"/>
</dbReference>
<dbReference type="PDB" id="3M4O">
    <property type="method" value="X-ray"/>
    <property type="resolution" value="3.57 A"/>
    <property type="chains" value="L=1-70"/>
</dbReference>
<dbReference type="PDB" id="3PO2">
    <property type="method" value="X-ray"/>
    <property type="resolution" value="3.30 A"/>
    <property type="chains" value="L=1-70"/>
</dbReference>
<dbReference type="PDB" id="3PO3">
    <property type="method" value="X-ray"/>
    <property type="resolution" value="3.30 A"/>
    <property type="chains" value="L=1-70"/>
</dbReference>
<dbReference type="PDB" id="3QT1">
    <property type="method" value="X-ray"/>
    <property type="resolution" value="4.30 A"/>
    <property type="chains" value="L=1-70"/>
</dbReference>
<dbReference type="PDB" id="3RZD">
    <property type="method" value="X-ray"/>
    <property type="resolution" value="3.30 A"/>
    <property type="chains" value="L=1-70"/>
</dbReference>
<dbReference type="PDB" id="3RZO">
    <property type="method" value="X-ray"/>
    <property type="resolution" value="3.00 A"/>
    <property type="chains" value="L=1-70"/>
</dbReference>
<dbReference type="PDB" id="3S14">
    <property type="method" value="X-ray"/>
    <property type="resolution" value="2.85 A"/>
    <property type="chains" value="L=1-70"/>
</dbReference>
<dbReference type="PDB" id="3S15">
    <property type="method" value="X-ray"/>
    <property type="resolution" value="3.30 A"/>
    <property type="chains" value="L=1-70"/>
</dbReference>
<dbReference type="PDB" id="3S16">
    <property type="method" value="X-ray"/>
    <property type="resolution" value="3.24 A"/>
    <property type="chains" value="L=1-70"/>
</dbReference>
<dbReference type="PDB" id="3S17">
    <property type="method" value="X-ray"/>
    <property type="resolution" value="3.20 A"/>
    <property type="chains" value="L=1-70"/>
</dbReference>
<dbReference type="PDB" id="3S1M">
    <property type="method" value="X-ray"/>
    <property type="resolution" value="3.13 A"/>
    <property type="chains" value="L=1-70"/>
</dbReference>
<dbReference type="PDB" id="3S1N">
    <property type="method" value="X-ray"/>
    <property type="resolution" value="3.10 A"/>
    <property type="chains" value="L=1-70"/>
</dbReference>
<dbReference type="PDB" id="3S1Q">
    <property type="method" value="X-ray"/>
    <property type="resolution" value="3.30 A"/>
    <property type="chains" value="L=1-70"/>
</dbReference>
<dbReference type="PDB" id="3S1R">
    <property type="method" value="X-ray"/>
    <property type="resolution" value="3.20 A"/>
    <property type="chains" value="L=1-70"/>
</dbReference>
<dbReference type="PDB" id="3S2D">
    <property type="method" value="X-ray"/>
    <property type="resolution" value="3.20 A"/>
    <property type="chains" value="L=1-70"/>
</dbReference>
<dbReference type="PDB" id="3S2H">
    <property type="method" value="X-ray"/>
    <property type="resolution" value="3.30 A"/>
    <property type="chains" value="L=1-70"/>
</dbReference>
<dbReference type="PDB" id="4A3B">
    <property type="method" value="X-ray"/>
    <property type="resolution" value="3.50 A"/>
    <property type="chains" value="L=1-70"/>
</dbReference>
<dbReference type="PDB" id="4A3C">
    <property type="method" value="X-ray"/>
    <property type="resolution" value="3.50 A"/>
    <property type="chains" value="L=1-70"/>
</dbReference>
<dbReference type="PDB" id="4A3D">
    <property type="method" value="X-ray"/>
    <property type="resolution" value="3.40 A"/>
    <property type="chains" value="L=1-70"/>
</dbReference>
<dbReference type="PDB" id="4A3E">
    <property type="method" value="X-ray"/>
    <property type="resolution" value="3.40 A"/>
    <property type="chains" value="L=1-70"/>
</dbReference>
<dbReference type="PDB" id="4A3F">
    <property type="method" value="X-ray"/>
    <property type="resolution" value="3.50 A"/>
    <property type="chains" value="L=1-70"/>
</dbReference>
<dbReference type="PDB" id="4A3G">
    <property type="method" value="X-ray"/>
    <property type="resolution" value="3.50 A"/>
    <property type="chains" value="L=1-70"/>
</dbReference>
<dbReference type="PDB" id="4A3I">
    <property type="method" value="X-ray"/>
    <property type="resolution" value="3.80 A"/>
    <property type="chains" value="L=1-70"/>
</dbReference>
<dbReference type="PDB" id="4A3J">
    <property type="method" value="X-ray"/>
    <property type="resolution" value="3.70 A"/>
    <property type="chains" value="L=1-70"/>
</dbReference>
<dbReference type="PDB" id="4A3K">
    <property type="method" value="X-ray"/>
    <property type="resolution" value="3.50 A"/>
    <property type="chains" value="L=1-70"/>
</dbReference>
<dbReference type="PDB" id="4A3L">
    <property type="method" value="X-ray"/>
    <property type="resolution" value="3.50 A"/>
    <property type="chains" value="L=1-70"/>
</dbReference>
<dbReference type="PDB" id="4A3M">
    <property type="method" value="X-ray"/>
    <property type="resolution" value="3.90 A"/>
    <property type="chains" value="L=1-70"/>
</dbReference>
<dbReference type="PDB" id="4A93">
    <property type="method" value="X-ray"/>
    <property type="resolution" value="3.40 A"/>
    <property type="chains" value="L=1-70"/>
</dbReference>
<dbReference type="PDB" id="4BBR">
    <property type="method" value="X-ray"/>
    <property type="resolution" value="3.40 A"/>
    <property type="chains" value="L=1-70"/>
</dbReference>
<dbReference type="PDB" id="4BBS">
    <property type="method" value="X-ray"/>
    <property type="resolution" value="3.60 A"/>
    <property type="chains" value="L=1-70"/>
</dbReference>
<dbReference type="PDB" id="4BXX">
    <property type="method" value="X-ray"/>
    <property type="resolution" value="3.28 A"/>
    <property type="chains" value="L=1-70"/>
</dbReference>
<dbReference type="PDB" id="4BXZ">
    <property type="method" value="X-ray"/>
    <property type="resolution" value="4.80 A"/>
    <property type="chains" value="L=1-70"/>
</dbReference>
<dbReference type="PDB" id="4BY1">
    <property type="method" value="X-ray"/>
    <property type="resolution" value="3.60 A"/>
    <property type="chains" value="L=1-70"/>
</dbReference>
<dbReference type="PDB" id="4BY7">
    <property type="method" value="X-ray"/>
    <property type="resolution" value="3.15 A"/>
    <property type="chains" value="L=1-70"/>
</dbReference>
<dbReference type="PDB" id="4C2M">
    <property type="method" value="X-ray"/>
    <property type="resolution" value="2.80 A"/>
    <property type="chains" value="1/L=1-70"/>
</dbReference>
<dbReference type="PDB" id="4C3H">
    <property type="method" value="X-ray"/>
    <property type="resolution" value="3.27 A"/>
    <property type="chains" value="L=1-70"/>
</dbReference>
<dbReference type="PDB" id="4C3I">
    <property type="method" value="X-ray"/>
    <property type="resolution" value="3.00 A"/>
    <property type="chains" value="L=1-70"/>
</dbReference>
<dbReference type="PDB" id="4C3J">
    <property type="method" value="X-ray"/>
    <property type="resolution" value="3.35 A"/>
    <property type="chains" value="L=1-70"/>
</dbReference>
<dbReference type="PDB" id="4V1M">
    <property type="method" value="EM"/>
    <property type="resolution" value="6.60 A"/>
    <property type="chains" value="L=1-70"/>
</dbReference>
<dbReference type="PDB" id="4V1N">
    <property type="method" value="EM"/>
    <property type="resolution" value="7.80 A"/>
    <property type="chains" value="L=1-70"/>
</dbReference>
<dbReference type="PDB" id="4V1O">
    <property type="method" value="EM"/>
    <property type="resolution" value="9.70 A"/>
    <property type="chains" value="L=1-70"/>
</dbReference>
<dbReference type="PDB" id="4X67">
    <property type="method" value="X-ray"/>
    <property type="resolution" value="4.10 A"/>
    <property type="chains" value="L=1-70"/>
</dbReference>
<dbReference type="PDB" id="4X6A">
    <property type="method" value="X-ray"/>
    <property type="resolution" value="3.96 A"/>
    <property type="chains" value="L=1-70"/>
</dbReference>
<dbReference type="PDB" id="4Y52">
    <property type="method" value="X-ray"/>
    <property type="resolution" value="3.50 A"/>
    <property type="chains" value="L=1-70"/>
</dbReference>
<dbReference type="PDB" id="4Y7N">
    <property type="method" value="X-ray"/>
    <property type="resolution" value="3.30 A"/>
    <property type="chains" value="L=1-70"/>
</dbReference>
<dbReference type="PDB" id="4YM7">
    <property type="method" value="X-ray"/>
    <property type="resolution" value="5.50 A"/>
    <property type="chains" value="AL/BL/CL/DL/EL/FL=1-70"/>
</dbReference>
<dbReference type="PDB" id="5C3E">
    <property type="method" value="X-ray"/>
    <property type="resolution" value="3.70 A"/>
    <property type="chains" value="L=1-70"/>
</dbReference>
<dbReference type="PDB" id="5C44">
    <property type="method" value="X-ray"/>
    <property type="resolution" value="3.95 A"/>
    <property type="chains" value="L=1-70"/>
</dbReference>
<dbReference type="PDB" id="5C4A">
    <property type="method" value="X-ray"/>
    <property type="resolution" value="4.20 A"/>
    <property type="chains" value="L=1-70"/>
</dbReference>
<dbReference type="PDB" id="5C4J">
    <property type="method" value="X-ray"/>
    <property type="resolution" value="4.00 A"/>
    <property type="chains" value="L=1-70"/>
</dbReference>
<dbReference type="PDB" id="5C4X">
    <property type="method" value="X-ray"/>
    <property type="resolution" value="4.00 A"/>
    <property type="chains" value="L=1-70"/>
</dbReference>
<dbReference type="PDB" id="5FJ8">
    <property type="method" value="EM"/>
    <property type="resolution" value="3.90 A"/>
    <property type="chains" value="L=1-70"/>
</dbReference>
<dbReference type="PDB" id="5FJ9">
    <property type="method" value="EM"/>
    <property type="resolution" value="4.60 A"/>
    <property type="chains" value="L=1-70"/>
</dbReference>
<dbReference type="PDB" id="5FJA">
    <property type="method" value="EM"/>
    <property type="resolution" value="4.65 A"/>
    <property type="chains" value="L=1-70"/>
</dbReference>
<dbReference type="PDB" id="5FMF">
    <property type="method" value="EM"/>
    <property type="resolution" value="6.00 A"/>
    <property type="chains" value="L=25-70"/>
</dbReference>
<dbReference type="PDB" id="5FYW">
    <property type="method" value="EM"/>
    <property type="resolution" value="4.35 A"/>
    <property type="chains" value="L=1-70"/>
</dbReference>
<dbReference type="PDB" id="5FZ5">
    <property type="method" value="EM"/>
    <property type="resolution" value="8.80 A"/>
    <property type="chains" value="L=1-70"/>
</dbReference>
<dbReference type="PDB" id="5G5L">
    <property type="method" value="EM"/>
    <property type="resolution" value="4.80 A"/>
    <property type="chains" value="L=1-70"/>
</dbReference>
<dbReference type="PDB" id="5IP7">
    <property type="method" value="X-ray"/>
    <property type="resolution" value="3.52 A"/>
    <property type="chains" value="L=25-70"/>
</dbReference>
<dbReference type="PDB" id="5IP9">
    <property type="method" value="X-ray"/>
    <property type="resolution" value="3.90 A"/>
    <property type="chains" value="L=25-70"/>
</dbReference>
<dbReference type="PDB" id="5LMX">
    <property type="method" value="EM"/>
    <property type="resolution" value="4.90 A"/>
    <property type="chains" value="L=1-70"/>
</dbReference>
<dbReference type="PDB" id="5M3F">
    <property type="method" value="EM"/>
    <property type="resolution" value="3.80 A"/>
    <property type="chains" value="L=1-70"/>
</dbReference>
<dbReference type="PDB" id="5M3M">
    <property type="method" value="EM"/>
    <property type="resolution" value="4.00 A"/>
    <property type="chains" value="L=1-70"/>
</dbReference>
<dbReference type="PDB" id="5M5W">
    <property type="method" value="EM"/>
    <property type="resolution" value="3.80 A"/>
    <property type="chains" value="L=1-70"/>
</dbReference>
<dbReference type="PDB" id="5M5X">
    <property type="method" value="EM"/>
    <property type="resolution" value="4.00 A"/>
    <property type="chains" value="L=1-70"/>
</dbReference>
<dbReference type="PDB" id="5M5Y">
    <property type="method" value="EM"/>
    <property type="resolution" value="4.00 A"/>
    <property type="chains" value="L=1-70"/>
</dbReference>
<dbReference type="PDB" id="5M64">
    <property type="method" value="EM"/>
    <property type="resolution" value="4.60 A"/>
    <property type="chains" value="L=1-70"/>
</dbReference>
<dbReference type="PDB" id="5N5Y">
    <property type="method" value="EM"/>
    <property type="resolution" value="7.70 A"/>
    <property type="chains" value="L=1-70"/>
</dbReference>
<dbReference type="PDB" id="5N5Z">
    <property type="method" value="EM"/>
    <property type="resolution" value="7.70 A"/>
    <property type="chains" value="L=1-70"/>
</dbReference>
<dbReference type="PDB" id="5N60">
    <property type="method" value="EM"/>
    <property type="resolution" value="7.70 A"/>
    <property type="chains" value="L=1-70"/>
</dbReference>
<dbReference type="PDB" id="5N61">
    <property type="method" value="EM"/>
    <property type="resolution" value="3.40 A"/>
    <property type="chains" value="L=1-70"/>
</dbReference>
<dbReference type="PDB" id="5OA1">
    <property type="method" value="EM"/>
    <property type="resolution" value="4.40 A"/>
    <property type="chains" value="L=1-70"/>
</dbReference>
<dbReference type="PDB" id="5OQJ">
    <property type="method" value="EM"/>
    <property type="resolution" value="4.70 A"/>
    <property type="chains" value="L=1-70"/>
</dbReference>
<dbReference type="PDB" id="5OQM">
    <property type="method" value="EM"/>
    <property type="resolution" value="5.80 A"/>
    <property type="chains" value="L=1-70"/>
</dbReference>
<dbReference type="PDB" id="5OT2">
    <property type="method" value="X-ray"/>
    <property type="resolution" value="3.20 A"/>
    <property type="chains" value="L=1-70"/>
</dbReference>
<dbReference type="PDB" id="5SVA">
    <property type="method" value="EM"/>
    <property type="resolution" value="15.30 A"/>
    <property type="chains" value="L=1-70"/>
</dbReference>
<dbReference type="PDB" id="5U5Q">
    <property type="method" value="X-ray"/>
    <property type="resolution" value="3.80 A"/>
    <property type="chains" value="L=1-70"/>
</dbReference>
<dbReference type="PDB" id="5VVR">
    <property type="method" value="EM"/>
    <property type="resolution" value="5.80 A"/>
    <property type="chains" value="L=1-70"/>
</dbReference>
<dbReference type="PDB" id="5VVS">
    <property type="method" value="EM"/>
    <property type="resolution" value="6.40 A"/>
    <property type="chains" value="L=1-70"/>
</dbReference>
<dbReference type="PDB" id="5W4U">
    <property type="method" value="X-ray"/>
    <property type="resolution" value="3.60 A"/>
    <property type="chains" value="L=1-70"/>
</dbReference>
<dbReference type="PDB" id="5W51">
    <property type="method" value="X-ray"/>
    <property type="resolution" value="3.40 A"/>
    <property type="chains" value="L=1-70"/>
</dbReference>
<dbReference type="PDB" id="5W5Y">
    <property type="method" value="EM"/>
    <property type="resolution" value="3.80 A"/>
    <property type="chains" value="L=1-70"/>
</dbReference>
<dbReference type="PDB" id="5W64">
    <property type="method" value="EM"/>
    <property type="resolution" value="4.20 A"/>
    <property type="chains" value="L=1-70"/>
</dbReference>
<dbReference type="PDB" id="5W65">
    <property type="method" value="EM"/>
    <property type="resolution" value="4.30 A"/>
    <property type="chains" value="L=1-70"/>
</dbReference>
<dbReference type="PDB" id="5W66">
    <property type="method" value="EM"/>
    <property type="resolution" value="3.90 A"/>
    <property type="chains" value="L=1-70"/>
</dbReference>
<dbReference type="PDB" id="6BLO">
    <property type="method" value="X-ray"/>
    <property type="resolution" value="3.40 A"/>
    <property type="chains" value="L=1-70"/>
</dbReference>
<dbReference type="PDB" id="6BLP">
    <property type="method" value="X-ray"/>
    <property type="resolution" value="3.20 A"/>
    <property type="chains" value="L=1-70"/>
</dbReference>
<dbReference type="PDB" id="6BM2">
    <property type="method" value="X-ray"/>
    <property type="resolution" value="3.40 A"/>
    <property type="chains" value="L=1-70"/>
</dbReference>
<dbReference type="PDB" id="6BM4">
    <property type="method" value="X-ray"/>
    <property type="resolution" value="2.95 A"/>
    <property type="chains" value="L=1-70"/>
</dbReference>
<dbReference type="PDB" id="6BQF">
    <property type="method" value="X-ray"/>
    <property type="resolution" value="3.35 A"/>
    <property type="chains" value="L=1-70"/>
</dbReference>
<dbReference type="PDB" id="6CNB">
    <property type="method" value="EM"/>
    <property type="resolution" value="4.10 A"/>
    <property type="chains" value="L=1-70"/>
</dbReference>
<dbReference type="PDB" id="6CNC">
    <property type="method" value="EM"/>
    <property type="resolution" value="4.10 A"/>
    <property type="chains" value="L=1-70"/>
</dbReference>
<dbReference type="PDB" id="6CND">
    <property type="method" value="EM"/>
    <property type="resolution" value="4.80 A"/>
    <property type="chains" value="L=1-70"/>
</dbReference>
<dbReference type="PDB" id="6CNF">
    <property type="method" value="EM"/>
    <property type="resolution" value="4.50 A"/>
    <property type="chains" value="L=1-70"/>
</dbReference>
<dbReference type="PDB" id="6EU0">
    <property type="method" value="EM"/>
    <property type="resolution" value="4.00 A"/>
    <property type="chains" value="L=1-70"/>
</dbReference>
<dbReference type="PDB" id="6EU1">
    <property type="method" value="EM"/>
    <property type="resolution" value="3.40 A"/>
    <property type="chains" value="L=1-70"/>
</dbReference>
<dbReference type="PDB" id="6EU2">
    <property type="method" value="EM"/>
    <property type="resolution" value="3.40 A"/>
    <property type="chains" value="L=1-70"/>
</dbReference>
<dbReference type="PDB" id="6EU3">
    <property type="method" value="EM"/>
    <property type="resolution" value="3.30 A"/>
    <property type="chains" value="L=1-70"/>
</dbReference>
<dbReference type="PDB" id="6F40">
    <property type="method" value="EM"/>
    <property type="resolution" value="3.70 A"/>
    <property type="chains" value="L=1-70"/>
</dbReference>
<dbReference type="PDB" id="6F41">
    <property type="method" value="EM"/>
    <property type="resolution" value="4.30 A"/>
    <property type="chains" value="L=1-70"/>
</dbReference>
<dbReference type="PDB" id="6F42">
    <property type="method" value="EM"/>
    <property type="resolution" value="5.50 A"/>
    <property type="chains" value="L=1-70"/>
</dbReference>
<dbReference type="PDB" id="6F44">
    <property type="method" value="EM"/>
    <property type="resolution" value="4.20 A"/>
    <property type="chains" value="L=1-70"/>
</dbReference>
<dbReference type="PDB" id="6GYK">
    <property type="method" value="EM"/>
    <property type="resolution" value="5.10 A"/>
    <property type="chains" value="L=1-70"/>
</dbReference>
<dbReference type="PDB" id="6GYL">
    <property type="method" value="EM"/>
    <property type="resolution" value="4.80 A"/>
    <property type="chains" value="L=1-70"/>
</dbReference>
<dbReference type="PDB" id="6GYM">
    <property type="method" value="EM"/>
    <property type="resolution" value="6.70 A"/>
    <property type="chains" value="L=1-70"/>
</dbReference>
<dbReference type="PDB" id="6H67">
    <property type="method" value="EM"/>
    <property type="resolution" value="3.60 A"/>
    <property type="chains" value="L=1-70"/>
</dbReference>
<dbReference type="PDB" id="6H68">
    <property type="method" value="EM"/>
    <property type="resolution" value="4.60 A"/>
    <property type="chains" value="L=1-70"/>
</dbReference>
<dbReference type="PDB" id="6HKO">
    <property type="method" value="EM"/>
    <property type="resolution" value="3.42 A"/>
    <property type="chains" value="L=1-70"/>
</dbReference>
<dbReference type="PDB" id="6HLQ">
    <property type="method" value="EM"/>
    <property type="resolution" value="3.18 A"/>
    <property type="chains" value="L=1-70"/>
</dbReference>
<dbReference type="PDB" id="6HLR">
    <property type="method" value="EM"/>
    <property type="resolution" value="3.18 A"/>
    <property type="chains" value="L=1-70"/>
</dbReference>
<dbReference type="PDB" id="6HLS">
    <property type="method" value="EM"/>
    <property type="resolution" value="3.21 A"/>
    <property type="chains" value="L=1-70"/>
</dbReference>
<dbReference type="PDB" id="6I84">
    <property type="method" value="EM"/>
    <property type="resolution" value="4.40 A"/>
    <property type="chains" value="L=1-70"/>
</dbReference>
<dbReference type="PDB" id="6O6C">
    <property type="method" value="EM"/>
    <property type="resolution" value="3.10 A"/>
    <property type="chains" value="J=1-70"/>
</dbReference>
<dbReference type="PDB" id="6RQH">
    <property type="method" value="EM"/>
    <property type="resolution" value="3.70 A"/>
    <property type="chains" value="L=1-70"/>
</dbReference>
<dbReference type="PDB" id="6RQL">
    <property type="method" value="EM"/>
    <property type="resolution" value="2.90 A"/>
    <property type="chains" value="L=1-70"/>
</dbReference>
<dbReference type="PDB" id="6RQT">
    <property type="method" value="EM"/>
    <property type="resolution" value="4.00 A"/>
    <property type="chains" value="L=1-70"/>
</dbReference>
<dbReference type="PDB" id="6RRD">
    <property type="method" value="EM"/>
    <property type="resolution" value="3.10 A"/>
    <property type="chains" value="L=1-70"/>
</dbReference>
<dbReference type="PDB" id="6RUI">
    <property type="method" value="EM"/>
    <property type="resolution" value="2.70 A"/>
    <property type="chains" value="L=1-70"/>
</dbReference>
<dbReference type="PDB" id="6RUO">
    <property type="method" value="EM"/>
    <property type="resolution" value="3.50 A"/>
    <property type="chains" value="L=1-70"/>
</dbReference>
<dbReference type="PDB" id="6RWE">
    <property type="method" value="EM"/>
    <property type="resolution" value="3.00 A"/>
    <property type="chains" value="L=1-70"/>
</dbReference>
<dbReference type="PDB" id="6TPS">
    <property type="method" value="EM"/>
    <property type="resolution" value="3.54 A"/>
    <property type="chains" value="L=1-70"/>
</dbReference>
<dbReference type="PDB" id="6TUT">
    <property type="method" value="EM"/>
    <property type="resolution" value="3.25 A"/>
    <property type="chains" value="L=1-70"/>
</dbReference>
<dbReference type="PDB" id="6UPX">
    <property type="method" value="X-ray"/>
    <property type="resolution" value="3.40 A"/>
    <property type="chains" value="L=1-70"/>
</dbReference>
<dbReference type="PDB" id="6UPY">
    <property type="method" value="X-ray"/>
    <property type="resolution" value="3.40 A"/>
    <property type="chains" value="L=1-70"/>
</dbReference>
<dbReference type="PDB" id="6UPZ">
    <property type="method" value="X-ray"/>
    <property type="resolution" value="3.10 A"/>
    <property type="chains" value="L=1-70"/>
</dbReference>
<dbReference type="PDB" id="6UQ0">
    <property type="method" value="X-ray"/>
    <property type="resolution" value="3.56 A"/>
    <property type="chains" value="L=1-70"/>
</dbReference>
<dbReference type="PDB" id="6UQ1">
    <property type="method" value="X-ray"/>
    <property type="resolution" value="3.60 A"/>
    <property type="chains" value="L=1-70"/>
</dbReference>
<dbReference type="PDB" id="6UQ2">
    <property type="method" value="X-ray"/>
    <property type="resolution" value="3.20 A"/>
    <property type="chains" value="L=1-70"/>
</dbReference>
<dbReference type="PDB" id="6UQ3">
    <property type="method" value="X-ray"/>
    <property type="resolution" value="3.47 A"/>
    <property type="chains" value="L=1-70"/>
</dbReference>
<dbReference type="PDB" id="7KED">
    <property type="method" value="X-ray"/>
    <property type="resolution" value="3.60 A"/>
    <property type="chains" value="L=1-70"/>
</dbReference>
<dbReference type="PDB" id="7KEE">
    <property type="method" value="X-ray"/>
    <property type="resolution" value="3.45 A"/>
    <property type="chains" value="L=1-70"/>
</dbReference>
<dbReference type="PDB" id="7KEF">
    <property type="method" value="X-ray"/>
    <property type="resolution" value="3.89 A"/>
    <property type="chains" value="L=1-70"/>
</dbReference>
<dbReference type="PDB" id="7MEI">
    <property type="method" value="EM"/>
    <property type="resolution" value="3.54 A"/>
    <property type="chains" value="L/l=1-70"/>
</dbReference>
<dbReference type="PDB" id="7MK9">
    <property type="method" value="EM"/>
    <property type="resolution" value="3.54 A"/>
    <property type="chains" value="L=1-70"/>
</dbReference>
<dbReference type="PDB" id="7MKA">
    <property type="method" value="EM"/>
    <property type="resolution" value="3.54 A"/>
    <property type="chains" value="l=1-70"/>
</dbReference>
<dbReference type="PDB" id="7ML0">
    <property type="method" value="EM"/>
    <property type="resolution" value="3.00 A"/>
    <property type="chains" value="L=1-70"/>
</dbReference>
<dbReference type="PDB" id="7ML1">
    <property type="method" value="EM"/>
    <property type="resolution" value="4.00 A"/>
    <property type="chains" value="L=1-70"/>
</dbReference>
<dbReference type="PDB" id="7ML2">
    <property type="method" value="EM"/>
    <property type="resolution" value="3.40 A"/>
    <property type="chains" value="L=1-70"/>
</dbReference>
<dbReference type="PDB" id="7ML4">
    <property type="method" value="EM"/>
    <property type="resolution" value="3.10 A"/>
    <property type="chains" value="L=1-70"/>
</dbReference>
<dbReference type="PDB" id="7NKX">
    <property type="method" value="EM"/>
    <property type="resolution" value="2.90 A"/>
    <property type="chains" value="L=1-70"/>
</dbReference>
<dbReference type="PDB" id="7NKY">
    <property type="method" value="EM"/>
    <property type="resolution" value="3.20 A"/>
    <property type="chains" value="L=1-70"/>
</dbReference>
<dbReference type="PDB" id="7O4I">
    <property type="method" value="EM"/>
    <property type="resolution" value="3.20 A"/>
    <property type="chains" value="L=1-70"/>
</dbReference>
<dbReference type="PDB" id="7O4J">
    <property type="method" value="EM"/>
    <property type="resolution" value="2.90 A"/>
    <property type="chains" value="L=1-70"/>
</dbReference>
<dbReference type="PDB" id="7O72">
    <property type="method" value="EM"/>
    <property type="resolution" value="3.40 A"/>
    <property type="chains" value="L=1-70"/>
</dbReference>
<dbReference type="PDB" id="7O73">
    <property type="method" value="EM"/>
    <property type="resolution" value="3.40 A"/>
    <property type="chains" value="L=1-70"/>
</dbReference>
<dbReference type="PDB" id="7O75">
    <property type="method" value="EM"/>
    <property type="resolution" value="3.20 A"/>
    <property type="chains" value="L=1-70"/>
</dbReference>
<dbReference type="PDB" id="7RIM">
    <property type="method" value="X-ray"/>
    <property type="resolution" value="2.90 A"/>
    <property type="chains" value="L=1-70"/>
</dbReference>
<dbReference type="PDB" id="7RIP">
    <property type="method" value="X-ray"/>
    <property type="resolution" value="3.30 A"/>
    <property type="chains" value="L=1-70"/>
</dbReference>
<dbReference type="PDB" id="7RIQ">
    <property type="method" value="X-ray"/>
    <property type="resolution" value="3.00 A"/>
    <property type="chains" value="L=1-70"/>
</dbReference>
<dbReference type="PDB" id="7RIW">
    <property type="method" value="X-ray"/>
    <property type="resolution" value="3.20 A"/>
    <property type="chains" value="L=1-70"/>
</dbReference>
<dbReference type="PDB" id="7RIX">
    <property type="method" value="X-ray"/>
    <property type="resolution" value="3.40 A"/>
    <property type="chains" value="L=1-70"/>
</dbReference>
<dbReference type="PDB" id="7RIY">
    <property type="method" value="X-ray"/>
    <property type="resolution" value="3.70 A"/>
    <property type="chains" value="L=1-70"/>
</dbReference>
<dbReference type="PDB" id="7UI9">
    <property type="method" value="EM"/>
    <property type="resolution" value="3.30 A"/>
    <property type="chains" value="L=1-70"/>
</dbReference>
<dbReference type="PDB" id="7UIF">
    <property type="method" value="EM"/>
    <property type="resolution" value="4.60 A"/>
    <property type="chains" value="L=1-70"/>
</dbReference>
<dbReference type="PDB" id="7UIO">
    <property type="method" value="EM"/>
    <property type="resolution" value="3.30 A"/>
    <property type="chains" value="AL/BL=1-70"/>
</dbReference>
<dbReference type="PDB" id="7Z0H">
    <property type="method" value="EM"/>
    <property type="resolution" value="2.60 A"/>
    <property type="chains" value="L=26-70"/>
</dbReference>
<dbReference type="PDB" id="7Z1L">
    <property type="method" value="EM"/>
    <property type="resolution" value="2.80 A"/>
    <property type="chains" value="L=1-70"/>
</dbReference>
<dbReference type="PDB" id="7Z1M">
    <property type="method" value="EM"/>
    <property type="resolution" value="3.40 A"/>
    <property type="chains" value="L=1-70"/>
</dbReference>
<dbReference type="PDB" id="7Z1N">
    <property type="method" value="EM"/>
    <property type="resolution" value="3.90 A"/>
    <property type="chains" value="L=1-70"/>
</dbReference>
<dbReference type="PDB" id="7Z1O">
    <property type="method" value="EM"/>
    <property type="resolution" value="2.70 A"/>
    <property type="chains" value="L=1-70"/>
</dbReference>
<dbReference type="PDB" id="7Z2Z">
    <property type="method" value="EM"/>
    <property type="resolution" value="3.07 A"/>
    <property type="chains" value="L=26-70"/>
</dbReference>
<dbReference type="PDB" id="7Z30">
    <property type="method" value="EM"/>
    <property type="resolution" value="2.90 A"/>
    <property type="chains" value="L=26-70"/>
</dbReference>
<dbReference type="PDB" id="7Z31">
    <property type="method" value="EM"/>
    <property type="resolution" value="2.76 A"/>
    <property type="chains" value="L=26-70"/>
</dbReference>
<dbReference type="PDB" id="7ZS9">
    <property type="method" value="EM"/>
    <property type="resolution" value="3.10 A"/>
    <property type="chains" value="L=1-70"/>
</dbReference>
<dbReference type="PDB" id="7ZSA">
    <property type="method" value="EM"/>
    <property type="resolution" value="4.00 A"/>
    <property type="chains" value="L=1-70"/>
</dbReference>
<dbReference type="PDB" id="7ZSB">
    <property type="method" value="EM"/>
    <property type="resolution" value="6.60 A"/>
    <property type="chains" value="L=1-70"/>
</dbReference>
<dbReference type="PDB" id="8BWS">
    <property type="method" value="EM"/>
    <property type="resolution" value="3.20 A"/>
    <property type="chains" value="L=1-70"/>
</dbReference>
<dbReference type="PDB" id="8CEN">
    <property type="method" value="EM"/>
    <property type="resolution" value="3.00 A"/>
    <property type="chains" value="L=1-70"/>
</dbReference>
<dbReference type="PDB" id="8CEO">
    <property type="method" value="EM"/>
    <property type="resolution" value="3.60 A"/>
    <property type="chains" value="L=1-70"/>
</dbReference>
<dbReference type="PDB" id="8JCH">
    <property type="method" value="EM"/>
    <property type="resolution" value="2.70 A"/>
    <property type="chains" value="L=1-70"/>
</dbReference>
<dbReference type="PDB" id="8K5P">
    <property type="method" value="EM"/>
    <property type="resolution" value="2.80 A"/>
    <property type="chains" value="L=1-70"/>
</dbReference>
<dbReference type="PDB" id="8RAM">
    <property type="method" value="EM"/>
    <property type="resolution" value="2.80 A"/>
    <property type="chains" value="L=1-70"/>
</dbReference>
<dbReference type="PDB" id="8RAP">
    <property type="method" value="EM"/>
    <property type="resolution" value="4.30 A"/>
    <property type="chains" value="L=1-70"/>
</dbReference>
<dbReference type="PDB" id="8TUG">
    <property type="method" value="EM"/>
    <property type="resolution" value="3.50 A"/>
    <property type="chains" value="L=1-70"/>
</dbReference>
<dbReference type="PDB" id="8TVP">
    <property type="method" value="EM"/>
    <property type="resolution" value="3.70 A"/>
    <property type="chains" value="L=1-70"/>
</dbReference>
<dbReference type="PDB" id="8TVQ">
    <property type="method" value="EM"/>
    <property type="resolution" value="4.60 A"/>
    <property type="chains" value="L=1-70"/>
</dbReference>
<dbReference type="PDB" id="8TVS">
    <property type="method" value="EM"/>
    <property type="resolution" value="4.40 A"/>
    <property type="chains" value="L=1-70"/>
</dbReference>
<dbReference type="PDB" id="8TVV">
    <property type="method" value="EM"/>
    <property type="resolution" value="3.70 A"/>
    <property type="chains" value="L=1-70"/>
</dbReference>
<dbReference type="PDB" id="8TVW">
    <property type="method" value="EM"/>
    <property type="resolution" value="3.60 A"/>
    <property type="chains" value="L=1-70"/>
</dbReference>
<dbReference type="PDB" id="8TVX">
    <property type="method" value="EM"/>
    <property type="resolution" value="3.70 A"/>
    <property type="chains" value="L=1-70"/>
</dbReference>
<dbReference type="PDB" id="8TVY">
    <property type="method" value="EM"/>
    <property type="resolution" value="3.10 A"/>
    <property type="chains" value="L=1-70"/>
</dbReference>
<dbReference type="PDB" id="8UKQ">
    <property type="method" value="X-ray"/>
    <property type="resolution" value="3.50 A"/>
    <property type="chains" value="L=1-70"/>
</dbReference>
<dbReference type="PDB" id="8UKR">
    <property type="method" value="X-ray"/>
    <property type="resolution" value="3.78 A"/>
    <property type="chains" value="L=1-70"/>
</dbReference>
<dbReference type="PDB" id="8UKS">
    <property type="method" value="X-ray"/>
    <property type="resolution" value="3.40 A"/>
    <property type="chains" value="L=1-70"/>
</dbReference>
<dbReference type="PDB" id="8UKT">
    <property type="method" value="X-ray"/>
    <property type="resolution" value="3.60 A"/>
    <property type="chains" value="L=1-70"/>
</dbReference>
<dbReference type="PDB" id="8UKU">
    <property type="method" value="X-ray"/>
    <property type="resolution" value="3.60 A"/>
    <property type="chains" value="L=1-70"/>
</dbReference>
<dbReference type="PDB" id="8UMH">
    <property type="method" value="EM"/>
    <property type="resolution" value="4.10 A"/>
    <property type="chains" value="L=1-70"/>
</dbReference>
<dbReference type="PDB" id="8UMI">
    <property type="method" value="EM"/>
    <property type="resolution" value="3.70 A"/>
    <property type="chains" value="L=1-70"/>
</dbReference>
<dbReference type="PDB" id="8UOQ">
    <property type="method" value="EM"/>
    <property type="resolution" value="3.80 A"/>
    <property type="chains" value="L=1-70"/>
</dbReference>
<dbReference type="PDB" id="8UOT">
    <property type="method" value="EM"/>
    <property type="resolution" value="3.70 A"/>
    <property type="chains" value="L=1-70"/>
</dbReference>
<dbReference type="PDB" id="9BVT">
    <property type="method" value="X-ray"/>
    <property type="resolution" value="3.40 A"/>
    <property type="chains" value="L=1-70"/>
</dbReference>
<dbReference type="PDB" id="9BW0">
    <property type="method" value="X-ray"/>
    <property type="resolution" value="3.51 A"/>
    <property type="chains" value="L=1-70"/>
</dbReference>
<dbReference type="PDB" id="9JA1">
    <property type="method" value="EM"/>
    <property type="resolution" value="2.98 A"/>
    <property type="chains" value="L=1-70"/>
</dbReference>
<dbReference type="PDBsum" id="1I3Q"/>
<dbReference type="PDBsum" id="1I50"/>
<dbReference type="PDBsum" id="1I6H"/>
<dbReference type="PDBsum" id="1K83"/>
<dbReference type="PDBsum" id="1NIK"/>
<dbReference type="PDBsum" id="1NT9"/>
<dbReference type="PDBsum" id="1PQV"/>
<dbReference type="PDBsum" id="1R5U"/>
<dbReference type="PDBsum" id="1R9S"/>
<dbReference type="PDBsum" id="1R9T"/>
<dbReference type="PDBsum" id="1SFO"/>
<dbReference type="PDBsum" id="1TWA"/>
<dbReference type="PDBsum" id="1TWC"/>
<dbReference type="PDBsum" id="1TWF"/>
<dbReference type="PDBsum" id="1TWG"/>
<dbReference type="PDBsum" id="1TWH"/>
<dbReference type="PDBsum" id="1WCM"/>
<dbReference type="PDBsum" id="1Y1V"/>
<dbReference type="PDBsum" id="1Y1W"/>
<dbReference type="PDBsum" id="1Y1Y"/>
<dbReference type="PDBsum" id="1Y77"/>
<dbReference type="PDBsum" id="2B63"/>
<dbReference type="PDBsum" id="2B8K"/>
<dbReference type="PDBsum" id="2E2H"/>
<dbReference type="PDBsum" id="2E2I"/>
<dbReference type="PDBsum" id="2E2J"/>
<dbReference type="PDBsum" id="2JA5"/>
<dbReference type="PDBsum" id="2JA6"/>
<dbReference type="PDBsum" id="2JA7"/>
<dbReference type="PDBsum" id="2JA8"/>
<dbReference type="PDBsum" id="2NVQ"/>
<dbReference type="PDBsum" id="2NVT"/>
<dbReference type="PDBsum" id="2NVX"/>
<dbReference type="PDBsum" id="2NVY"/>
<dbReference type="PDBsum" id="2NVZ"/>
<dbReference type="PDBsum" id="2R7Z"/>
<dbReference type="PDBsum" id="2R92"/>
<dbReference type="PDBsum" id="2R93"/>
<dbReference type="PDBsum" id="2VUM"/>
<dbReference type="PDBsum" id="2YU9"/>
<dbReference type="PDBsum" id="3CQZ"/>
<dbReference type="PDBsum" id="3FKI"/>
<dbReference type="PDBsum" id="3GTG"/>
<dbReference type="PDBsum" id="3GTJ"/>
<dbReference type="PDBsum" id="3GTK"/>
<dbReference type="PDBsum" id="3GTL"/>
<dbReference type="PDBsum" id="3GTM"/>
<dbReference type="PDBsum" id="3GTO"/>
<dbReference type="PDBsum" id="3GTP"/>
<dbReference type="PDBsum" id="3GTQ"/>
<dbReference type="PDBsum" id="3H3V"/>
<dbReference type="PDBsum" id="3HOU"/>
<dbReference type="PDBsum" id="3HOV"/>
<dbReference type="PDBsum" id="3HOW"/>
<dbReference type="PDBsum" id="3HOX"/>
<dbReference type="PDBsum" id="3HOY"/>
<dbReference type="PDBsum" id="3HOZ"/>
<dbReference type="PDBsum" id="3I4M"/>
<dbReference type="PDBsum" id="3I4N"/>
<dbReference type="PDBsum" id="3J1N"/>
<dbReference type="PDBsum" id="3K1F"/>
<dbReference type="PDBsum" id="3K7A"/>
<dbReference type="PDBsum" id="3M3Y"/>
<dbReference type="PDBsum" id="3M4O"/>
<dbReference type="PDBsum" id="3PO2"/>
<dbReference type="PDBsum" id="3PO3"/>
<dbReference type="PDBsum" id="3QT1"/>
<dbReference type="PDBsum" id="3RZD"/>
<dbReference type="PDBsum" id="3RZO"/>
<dbReference type="PDBsum" id="3S14"/>
<dbReference type="PDBsum" id="3S15"/>
<dbReference type="PDBsum" id="3S16"/>
<dbReference type="PDBsum" id="3S17"/>
<dbReference type="PDBsum" id="3S1M"/>
<dbReference type="PDBsum" id="3S1N"/>
<dbReference type="PDBsum" id="3S1Q"/>
<dbReference type="PDBsum" id="3S1R"/>
<dbReference type="PDBsum" id="3S2D"/>
<dbReference type="PDBsum" id="3S2H"/>
<dbReference type="PDBsum" id="4A3B"/>
<dbReference type="PDBsum" id="4A3C"/>
<dbReference type="PDBsum" id="4A3D"/>
<dbReference type="PDBsum" id="4A3E"/>
<dbReference type="PDBsum" id="4A3F"/>
<dbReference type="PDBsum" id="4A3G"/>
<dbReference type="PDBsum" id="4A3I"/>
<dbReference type="PDBsum" id="4A3J"/>
<dbReference type="PDBsum" id="4A3K"/>
<dbReference type="PDBsum" id="4A3L"/>
<dbReference type="PDBsum" id="4A3M"/>
<dbReference type="PDBsum" id="4A93"/>
<dbReference type="PDBsum" id="4BBR"/>
<dbReference type="PDBsum" id="4BBS"/>
<dbReference type="PDBsum" id="4BXX"/>
<dbReference type="PDBsum" id="4BXZ"/>
<dbReference type="PDBsum" id="4BY1"/>
<dbReference type="PDBsum" id="4BY7"/>
<dbReference type="PDBsum" id="4C2M"/>
<dbReference type="PDBsum" id="4C3H"/>
<dbReference type="PDBsum" id="4C3I"/>
<dbReference type="PDBsum" id="4C3J"/>
<dbReference type="PDBsum" id="4V1M"/>
<dbReference type="PDBsum" id="4V1N"/>
<dbReference type="PDBsum" id="4V1O"/>
<dbReference type="PDBsum" id="4X67"/>
<dbReference type="PDBsum" id="4X6A"/>
<dbReference type="PDBsum" id="4Y52"/>
<dbReference type="PDBsum" id="4Y7N"/>
<dbReference type="PDBsum" id="4YM7"/>
<dbReference type="PDBsum" id="5C3E"/>
<dbReference type="PDBsum" id="5C44"/>
<dbReference type="PDBsum" id="5C4A"/>
<dbReference type="PDBsum" id="5C4J"/>
<dbReference type="PDBsum" id="5C4X"/>
<dbReference type="PDBsum" id="5FJ8"/>
<dbReference type="PDBsum" id="5FJ9"/>
<dbReference type="PDBsum" id="5FJA"/>
<dbReference type="PDBsum" id="5FMF"/>
<dbReference type="PDBsum" id="5FYW"/>
<dbReference type="PDBsum" id="5FZ5"/>
<dbReference type="PDBsum" id="5G5L"/>
<dbReference type="PDBsum" id="5IP7"/>
<dbReference type="PDBsum" id="5IP9"/>
<dbReference type="PDBsum" id="5LMX"/>
<dbReference type="PDBsum" id="5M3F"/>
<dbReference type="PDBsum" id="5M3M"/>
<dbReference type="PDBsum" id="5M5W"/>
<dbReference type="PDBsum" id="5M5X"/>
<dbReference type="PDBsum" id="5M5Y"/>
<dbReference type="PDBsum" id="5M64"/>
<dbReference type="PDBsum" id="5N5Y"/>
<dbReference type="PDBsum" id="5N5Z"/>
<dbReference type="PDBsum" id="5N60"/>
<dbReference type="PDBsum" id="5N61"/>
<dbReference type="PDBsum" id="5OA1"/>
<dbReference type="PDBsum" id="5OQJ"/>
<dbReference type="PDBsum" id="5OQM"/>
<dbReference type="PDBsum" id="5OT2"/>
<dbReference type="PDBsum" id="5SVA"/>
<dbReference type="PDBsum" id="5U5Q"/>
<dbReference type="PDBsum" id="5VVR"/>
<dbReference type="PDBsum" id="5VVS"/>
<dbReference type="PDBsum" id="5W4U"/>
<dbReference type="PDBsum" id="5W51"/>
<dbReference type="PDBsum" id="5W5Y"/>
<dbReference type="PDBsum" id="5W64"/>
<dbReference type="PDBsum" id="5W65"/>
<dbReference type="PDBsum" id="5W66"/>
<dbReference type="PDBsum" id="6BLO"/>
<dbReference type="PDBsum" id="6BLP"/>
<dbReference type="PDBsum" id="6BM2"/>
<dbReference type="PDBsum" id="6BM4"/>
<dbReference type="PDBsum" id="6BQF"/>
<dbReference type="PDBsum" id="6CNB"/>
<dbReference type="PDBsum" id="6CNC"/>
<dbReference type="PDBsum" id="6CND"/>
<dbReference type="PDBsum" id="6CNF"/>
<dbReference type="PDBsum" id="6EU0"/>
<dbReference type="PDBsum" id="6EU1"/>
<dbReference type="PDBsum" id="6EU2"/>
<dbReference type="PDBsum" id="6EU3"/>
<dbReference type="PDBsum" id="6F40"/>
<dbReference type="PDBsum" id="6F41"/>
<dbReference type="PDBsum" id="6F42"/>
<dbReference type="PDBsum" id="6F44"/>
<dbReference type="PDBsum" id="6GYK"/>
<dbReference type="PDBsum" id="6GYL"/>
<dbReference type="PDBsum" id="6GYM"/>
<dbReference type="PDBsum" id="6H67"/>
<dbReference type="PDBsum" id="6H68"/>
<dbReference type="PDBsum" id="6HKO"/>
<dbReference type="PDBsum" id="6HLQ"/>
<dbReference type="PDBsum" id="6HLR"/>
<dbReference type="PDBsum" id="6HLS"/>
<dbReference type="PDBsum" id="6I84"/>
<dbReference type="PDBsum" id="6O6C"/>
<dbReference type="PDBsum" id="6RQH"/>
<dbReference type="PDBsum" id="6RQL"/>
<dbReference type="PDBsum" id="6RQT"/>
<dbReference type="PDBsum" id="6RRD"/>
<dbReference type="PDBsum" id="6RUI"/>
<dbReference type="PDBsum" id="6RUO"/>
<dbReference type="PDBsum" id="6RWE"/>
<dbReference type="PDBsum" id="6TPS"/>
<dbReference type="PDBsum" id="6TUT"/>
<dbReference type="PDBsum" id="6UPX"/>
<dbReference type="PDBsum" id="6UPY"/>
<dbReference type="PDBsum" id="6UPZ"/>
<dbReference type="PDBsum" id="6UQ0"/>
<dbReference type="PDBsum" id="6UQ1"/>
<dbReference type="PDBsum" id="6UQ2"/>
<dbReference type="PDBsum" id="6UQ3"/>
<dbReference type="PDBsum" id="7KED"/>
<dbReference type="PDBsum" id="7KEE"/>
<dbReference type="PDBsum" id="7KEF"/>
<dbReference type="PDBsum" id="7MEI"/>
<dbReference type="PDBsum" id="7MK9"/>
<dbReference type="PDBsum" id="7MKA"/>
<dbReference type="PDBsum" id="7ML0"/>
<dbReference type="PDBsum" id="7ML1"/>
<dbReference type="PDBsum" id="7ML2"/>
<dbReference type="PDBsum" id="7ML4"/>
<dbReference type="PDBsum" id="7NKX"/>
<dbReference type="PDBsum" id="7NKY"/>
<dbReference type="PDBsum" id="7O4I"/>
<dbReference type="PDBsum" id="7O4J"/>
<dbReference type="PDBsum" id="7O72"/>
<dbReference type="PDBsum" id="7O73"/>
<dbReference type="PDBsum" id="7O75"/>
<dbReference type="PDBsum" id="7RIM"/>
<dbReference type="PDBsum" id="7RIP"/>
<dbReference type="PDBsum" id="7RIQ"/>
<dbReference type="PDBsum" id="7RIW"/>
<dbReference type="PDBsum" id="7RIX"/>
<dbReference type="PDBsum" id="7RIY"/>
<dbReference type="PDBsum" id="7UI9"/>
<dbReference type="PDBsum" id="7UIF"/>
<dbReference type="PDBsum" id="7UIO"/>
<dbReference type="PDBsum" id="7Z0H"/>
<dbReference type="PDBsum" id="7Z1L"/>
<dbReference type="PDBsum" id="7Z1M"/>
<dbReference type="PDBsum" id="7Z1N"/>
<dbReference type="PDBsum" id="7Z1O"/>
<dbReference type="PDBsum" id="7Z2Z"/>
<dbReference type="PDBsum" id="7Z30"/>
<dbReference type="PDBsum" id="7Z31"/>
<dbReference type="PDBsum" id="7ZS9"/>
<dbReference type="PDBsum" id="7ZSA"/>
<dbReference type="PDBsum" id="7ZSB"/>
<dbReference type="PDBsum" id="8BWS"/>
<dbReference type="PDBsum" id="8CEN"/>
<dbReference type="PDBsum" id="8CEO"/>
<dbReference type="PDBsum" id="8JCH"/>
<dbReference type="PDBsum" id="8K5P"/>
<dbReference type="PDBsum" id="8RAM"/>
<dbReference type="PDBsum" id="8RAP"/>
<dbReference type="PDBsum" id="8TUG"/>
<dbReference type="PDBsum" id="8TVP"/>
<dbReference type="PDBsum" id="8TVQ"/>
<dbReference type="PDBsum" id="8TVS"/>
<dbReference type="PDBsum" id="8TVV"/>
<dbReference type="PDBsum" id="8TVW"/>
<dbReference type="PDBsum" id="8TVX"/>
<dbReference type="PDBsum" id="8TVY"/>
<dbReference type="PDBsum" id="8UKQ"/>
<dbReference type="PDBsum" id="8UKR"/>
<dbReference type="PDBsum" id="8UKS"/>
<dbReference type="PDBsum" id="8UKT"/>
<dbReference type="PDBsum" id="8UKU"/>
<dbReference type="PDBsum" id="8UMH"/>
<dbReference type="PDBsum" id="8UMI"/>
<dbReference type="PDBsum" id="8UOQ"/>
<dbReference type="PDBsum" id="8UOT"/>
<dbReference type="PDBsum" id="9BVT"/>
<dbReference type="PDBsum" id="9BW0"/>
<dbReference type="PDBsum" id="9JA1"/>
<dbReference type="EMDB" id="EMD-0090"/>
<dbReference type="EMDB" id="EMD-0091"/>
<dbReference type="EMDB" id="EMD-0092"/>
<dbReference type="EMDB" id="EMD-0146"/>
<dbReference type="EMDB" id="EMD-0147"/>
<dbReference type="EMDB" id="EMD-0238"/>
<dbReference type="EMDB" id="EMD-0239"/>
<dbReference type="EMDB" id="EMD-0240"/>
<dbReference type="EMDB" id="EMD-0241"/>
<dbReference type="EMDB" id="EMD-0633"/>
<dbReference type="EMDB" id="EMD-10006"/>
<dbReference type="EMDB" id="EMD-10007"/>
<dbReference type="EMDB" id="EMD-10038"/>
<dbReference type="EMDB" id="EMD-10544"/>
<dbReference type="EMDB" id="EMD-10595"/>
<dbReference type="EMDB" id="EMD-12449"/>
<dbReference type="EMDB" id="EMD-12450"/>
<dbReference type="EMDB" id="EMD-12719"/>
<dbReference type="EMDB" id="EMD-12720"/>
<dbReference type="EMDB" id="EMD-12743"/>
<dbReference type="EMDB" id="EMD-12744"/>
<dbReference type="EMDB" id="EMD-12745"/>
<dbReference type="EMDB" id="EMD-14421"/>
<dbReference type="EMDB" id="EMD-14447"/>
<dbReference type="EMDB" id="EMD-14448"/>
<dbReference type="EMDB" id="EMD-14449"/>
<dbReference type="EMDB" id="EMD-14451"/>
<dbReference type="EMDB" id="EMD-14468"/>
<dbReference type="EMDB" id="EMD-14469"/>
<dbReference type="EMDB" id="EMD-14470"/>
<dbReference type="EMDB" id="EMD-14927"/>
<dbReference type="EMDB" id="EMD-14928"/>
<dbReference type="EMDB" id="EMD-14929"/>
<dbReference type="EMDB" id="EMD-16299"/>
<dbReference type="EMDB" id="EMD-16610"/>
<dbReference type="EMDB" id="EMD-16611"/>
<dbReference type="EMDB" id="EMD-19019"/>
<dbReference type="EMDB" id="EMD-19022"/>
<dbReference type="EMDB" id="EMD-26542"/>
<dbReference type="EMDB" id="EMD-26544"/>
<dbReference type="EMDB" id="EMD-26551"/>
<dbReference type="EMDB" id="EMD-2784"/>
<dbReference type="EMDB" id="EMD-2785"/>
<dbReference type="EMDB" id="EMD-2786"/>
<dbReference type="EMDB" id="EMD-3446"/>
<dbReference type="EMDB" id="EMD-3447"/>
<dbReference type="EMDB" id="EMD-3448"/>
<dbReference type="EMDB" id="EMD-3449"/>
<dbReference type="EMDB" id="EMD-3590"/>
<dbReference type="EMDB" id="EMD-3591"/>
<dbReference type="EMDB" id="EMD-3592"/>
<dbReference type="EMDB" id="EMD-3593"/>
<dbReference type="EMDB" id="EMD-36162"/>
<dbReference type="EMDB" id="EMD-36908"/>
<dbReference type="EMDB" id="EMD-3727"/>
<dbReference type="EMDB" id="EMD-3846"/>
<dbReference type="EMDB" id="EMD-3850"/>
<dbReference type="EMDB" id="EMD-3955"/>
<dbReference type="EMDB" id="EMD-3956"/>
<dbReference type="EMDB" id="EMD-3957"/>
<dbReference type="EMDB" id="EMD-3958"/>
<dbReference type="EMDB" id="EMD-4088"/>
<dbReference type="EMDB" id="EMD-4147"/>
<dbReference type="EMDB" id="EMD-4148"/>
<dbReference type="EMDB" id="EMD-4180"/>
<dbReference type="EMDB" id="EMD-4181"/>
<dbReference type="EMDB" id="EMD-4182"/>
<dbReference type="EMDB" id="EMD-4183"/>
<dbReference type="EMDB" id="EMD-42437"/>
<dbReference type="EMDB" id="EMD-42438"/>
<dbReference type="EMDB" id="EMD-4429"/>
<dbReference type="EMDB" id="EMD-4982"/>
<dbReference type="EMDB" id="EMD-4984"/>
<dbReference type="EMDB" id="EMD-4985"/>
<dbReference type="EMDB" id="EMD-4987"/>
<dbReference type="EMDB" id="EMD-61287"/>
<dbReference type="EMDB" id="EMD-7530"/>
<dbReference type="EMDB" id="EMD-7531"/>
<dbReference type="EMDB" id="EMD-7532"/>
<dbReference type="EMDB" id="EMD-7533"/>
<dbReference type="EMDB" id="EMD-8735"/>
<dbReference type="EMDB" id="EMD-8737"/>
<dbReference type="EMDB" id="EMD-8771"/>
<dbReference type="EMDB" id="EMD-8773"/>
<dbReference type="EMDB" id="EMD-8774"/>
<dbReference type="EMDB" id="EMD-8775"/>
<dbReference type="EMDB" id="EMD-8776"/>
<dbReference type="EMDB" id="EMD-8777"/>
<dbReference type="SMR" id="P40422"/>
<dbReference type="BioGRID" id="36577">
    <property type="interactions" value="126"/>
</dbReference>
<dbReference type="ComplexPortal" id="CPX-1664">
    <property type="entry name" value="DNA-directed RNA Polymerase I complex"/>
</dbReference>
<dbReference type="ComplexPortal" id="CPX-2660">
    <property type="entry name" value="DNA-directed RNA polymerase III complex"/>
</dbReference>
<dbReference type="ComplexPortal" id="CPX-2662">
    <property type="entry name" value="DNA-directed RNA polymerase II complex"/>
</dbReference>
<dbReference type="DIP" id="DIP-936N"/>
<dbReference type="FunCoup" id="P40422">
    <property type="interactions" value="722"/>
</dbReference>
<dbReference type="IntAct" id="P40422">
    <property type="interactions" value="68"/>
</dbReference>
<dbReference type="MINT" id="P40422"/>
<dbReference type="STRING" id="4932.YHR143W-A"/>
<dbReference type="iPTMnet" id="P40422"/>
<dbReference type="PaxDb" id="4932-YHR143W-A"/>
<dbReference type="PeptideAtlas" id="P40422"/>
<dbReference type="EnsemblFungi" id="YHR143W-A_mRNA">
    <property type="protein sequence ID" value="YHR143W-A"/>
    <property type="gene ID" value="YHR143W-A"/>
</dbReference>
<dbReference type="GeneID" id="856547"/>
<dbReference type="KEGG" id="sce:YHR143W-A"/>
<dbReference type="AGR" id="SGD:S000001185"/>
<dbReference type="SGD" id="S000001185">
    <property type="gene designation" value="RPC10"/>
</dbReference>
<dbReference type="VEuPathDB" id="FungiDB:YHR143W-A"/>
<dbReference type="eggNOG" id="KOG3507">
    <property type="taxonomic scope" value="Eukaryota"/>
</dbReference>
<dbReference type="GeneTree" id="ENSGT00940000169869"/>
<dbReference type="HOGENOM" id="CLU_179456_0_1_1"/>
<dbReference type="InParanoid" id="P40422"/>
<dbReference type="OMA" id="MTYICGD"/>
<dbReference type="OrthoDB" id="5585087at2759"/>
<dbReference type="BioCyc" id="YEAST:G3O-31179-MONOMER"/>
<dbReference type="Reactome" id="R-SCE-113418">
    <property type="pathway name" value="Formation of the Early Elongation Complex"/>
</dbReference>
<dbReference type="Reactome" id="R-SCE-674695">
    <property type="pathway name" value="RNA Polymerase II Pre-transcription Events"/>
</dbReference>
<dbReference type="Reactome" id="R-SCE-6781823">
    <property type="pathway name" value="Formation of TC-NER Pre-Incision Complex"/>
</dbReference>
<dbReference type="Reactome" id="R-SCE-6782135">
    <property type="pathway name" value="Dual incision in TC-NER"/>
</dbReference>
<dbReference type="Reactome" id="R-SCE-6782210">
    <property type="pathway name" value="Gap-filling DNA repair synthesis and ligation in TC-NER"/>
</dbReference>
<dbReference type="Reactome" id="R-SCE-6796648">
    <property type="pathway name" value="TP53 Regulates Transcription of DNA Repair Genes"/>
</dbReference>
<dbReference type="Reactome" id="R-SCE-6807505">
    <property type="pathway name" value="RNA polymerase II transcribes snRNA genes"/>
</dbReference>
<dbReference type="Reactome" id="R-SCE-72086">
    <property type="pathway name" value="mRNA Capping"/>
</dbReference>
<dbReference type="Reactome" id="R-SCE-72203">
    <property type="pathway name" value="Processing of Capped Intron-Containing Pre-mRNA"/>
</dbReference>
<dbReference type="Reactome" id="R-SCE-73762">
    <property type="pathway name" value="RNA Polymerase I Transcription Initiation"/>
</dbReference>
<dbReference type="Reactome" id="R-SCE-73772">
    <property type="pathway name" value="RNA Polymerase I Promoter Escape"/>
</dbReference>
<dbReference type="Reactome" id="R-SCE-73776">
    <property type="pathway name" value="RNA Polymerase II Promoter Escape"/>
</dbReference>
<dbReference type="Reactome" id="R-SCE-73779">
    <property type="pathway name" value="RNA Polymerase II Transcription Pre-Initiation And Promoter Opening"/>
</dbReference>
<dbReference type="Reactome" id="R-SCE-75953">
    <property type="pathway name" value="RNA Polymerase II Transcription Initiation"/>
</dbReference>
<dbReference type="Reactome" id="R-SCE-76042">
    <property type="pathway name" value="RNA Polymerase II Transcription Initiation And Promoter Clearance"/>
</dbReference>
<dbReference type="Reactome" id="R-SCE-76066">
    <property type="pathway name" value="RNA Polymerase III Transcription Initiation From Type 2 Promoter"/>
</dbReference>
<dbReference type="Reactome" id="R-SCE-77075">
    <property type="pathway name" value="RNA Pol II CTD phosphorylation and interaction with CE"/>
</dbReference>
<dbReference type="Reactome" id="R-SCE-9018519">
    <property type="pathway name" value="Estrogen-dependent gene expression"/>
</dbReference>
<dbReference type="BioGRID-ORCS" id="856547">
    <property type="hits" value="8 hits in 10 CRISPR screens"/>
</dbReference>
<dbReference type="CD-CODE" id="E03F929F">
    <property type="entry name" value="Stress granule"/>
</dbReference>
<dbReference type="EvolutionaryTrace" id="P40422"/>
<dbReference type="PRO" id="PR:P40422"/>
<dbReference type="Proteomes" id="UP000002311">
    <property type="component" value="Chromosome VIII"/>
</dbReference>
<dbReference type="RNAct" id="P40422">
    <property type="molecule type" value="protein"/>
</dbReference>
<dbReference type="GO" id="GO:0005737">
    <property type="term" value="C:cytoplasm"/>
    <property type="evidence" value="ECO:0007005"/>
    <property type="project" value="SGD"/>
</dbReference>
<dbReference type="GO" id="GO:0005730">
    <property type="term" value="C:nucleolus"/>
    <property type="evidence" value="ECO:0007005"/>
    <property type="project" value="SGD"/>
</dbReference>
<dbReference type="GO" id="GO:0005654">
    <property type="term" value="C:nucleoplasm"/>
    <property type="evidence" value="ECO:0000304"/>
    <property type="project" value="Reactome"/>
</dbReference>
<dbReference type="GO" id="GO:0005634">
    <property type="term" value="C:nucleus"/>
    <property type="evidence" value="ECO:0000314"/>
    <property type="project" value="ComplexPortal"/>
</dbReference>
<dbReference type="GO" id="GO:0005777">
    <property type="term" value="C:peroxisome"/>
    <property type="evidence" value="ECO:0000314"/>
    <property type="project" value="SGD"/>
</dbReference>
<dbReference type="GO" id="GO:0005736">
    <property type="term" value="C:RNA polymerase I complex"/>
    <property type="evidence" value="ECO:0000314"/>
    <property type="project" value="UniProtKB"/>
</dbReference>
<dbReference type="GO" id="GO:0005665">
    <property type="term" value="C:RNA polymerase II, core complex"/>
    <property type="evidence" value="ECO:0000314"/>
    <property type="project" value="SGD"/>
</dbReference>
<dbReference type="GO" id="GO:0005666">
    <property type="term" value="C:RNA polymerase III complex"/>
    <property type="evidence" value="ECO:0000314"/>
    <property type="project" value="SGD"/>
</dbReference>
<dbReference type="GO" id="GO:0003677">
    <property type="term" value="F:DNA binding"/>
    <property type="evidence" value="ECO:0007669"/>
    <property type="project" value="InterPro"/>
</dbReference>
<dbReference type="GO" id="GO:0003899">
    <property type="term" value="F:DNA-directed RNA polymerase activity"/>
    <property type="evidence" value="ECO:0000314"/>
    <property type="project" value="UniProtKB"/>
</dbReference>
<dbReference type="GO" id="GO:0008270">
    <property type="term" value="F:zinc ion binding"/>
    <property type="evidence" value="ECO:0000314"/>
    <property type="project" value="SGD"/>
</dbReference>
<dbReference type="GO" id="GO:0042790">
    <property type="term" value="P:nucleolar large rRNA transcription by RNA polymerase I"/>
    <property type="evidence" value="ECO:0000314"/>
    <property type="project" value="ComplexPortal"/>
</dbReference>
<dbReference type="GO" id="GO:0042254">
    <property type="term" value="P:ribosome biogenesis"/>
    <property type="evidence" value="ECO:0007669"/>
    <property type="project" value="UniProtKB-KW"/>
</dbReference>
<dbReference type="GO" id="GO:0001172">
    <property type="term" value="P:RNA-templated transcription"/>
    <property type="evidence" value="ECO:0007669"/>
    <property type="project" value="GOC"/>
</dbReference>
<dbReference type="GO" id="GO:0006363">
    <property type="term" value="P:termination of RNA polymerase I transcription"/>
    <property type="evidence" value="ECO:0000314"/>
    <property type="project" value="ComplexPortal"/>
</dbReference>
<dbReference type="GO" id="GO:0006386">
    <property type="term" value="P:termination of RNA polymerase III transcription"/>
    <property type="evidence" value="ECO:0000314"/>
    <property type="project" value="ComplexPortal"/>
</dbReference>
<dbReference type="GO" id="GO:0006360">
    <property type="term" value="P:transcription by RNA polymerase I"/>
    <property type="evidence" value="ECO:0000314"/>
    <property type="project" value="UniProtKB"/>
</dbReference>
<dbReference type="GO" id="GO:0006366">
    <property type="term" value="P:transcription by RNA polymerase II"/>
    <property type="evidence" value="ECO:0000315"/>
    <property type="project" value="SGD"/>
</dbReference>
<dbReference type="GO" id="GO:0006383">
    <property type="term" value="P:transcription by RNA polymerase III"/>
    <property type="evidence" value="ECO:0000314"/>
    <property type="project" value="ComplexPortal"/>
</dbReference>
<dbReference type="GO" id="GO:0006362">
    <property type="term" value="P:transcription elongation by RNA polymerase I"/>
    <property type="evidence" value="ECO:0000314"/>
    <property type="project" value="ComplexPortal"/>
</dbReference>
<dbReference type="GO" id="GO:0006368">
    <property type="term" value="P:transcription elongation by RNA polymerase II"/>
    <property type="evidence" value="ECO:0000314"/>
    <property type="project" value="ComplexPortal"/>
</dbReference>
<dbReference type="GO" id="GO:0006361">
    <property type="term" value="P:transcription initiation at RNA polymerase I promoter"/>
    <property type="evidence" value="ECO:0000314"/>
    <property type="project" value="ComplexPortal"/>
</dbReference>
<dbReference type="GO" id="GO:0006367">
    <property type="term" value="P:transcription initiation at RNA polymerase II promoter"/>
    <property type="evidence" value="ECO:0000314"/>
    <property type="project" value="ComplexPortal"/>
</dbReference>
<dbReference type="GO" id="GO:0006384">
    <property type="term" value="P:transcription initiation at RNA polymerase III promoter"/>
    <property type="evidence" value="ECO:0000314"/>
    <property type="project" value="ComplexPortal"/>
</dbReference>
<dbReference type="GO" id="GO:0042797">
    <property type="term" value="P:tRNA transcription by RNA polymerase III"/>
    <property type="evidence" value="ECO:0000314"/>
    <property type="project" value="SGD"/>
</dbReference>
<dbReference type="DisProt" id="DP00818"/>
<dbReference type="FunFam" id="2.20.28.30:FF:000003">
    <property type="entry name" value="DNA-directed RNA polymerases I, II, and III subunit RPABC4"/>
    <property type="match status" value="1"/>
</dbReference>
<dbReference type="Gene3D" id="2.20.28.30">
    <property type="entry name" value="RNA polymerase ii, chain L"/>
    <property type="match status" value="1"/>
</dbReference>
<dbReference type="InterPro" id="IPR006591">
    <property type="entry name" value="RNAP_P/RPABC4"/>
</dbReference>
<dbReference type="InterPro" id="IPR039747">
    <property type="entry name" value="RPABC4"/>
</dbReference>
<dbReference type="InterPro" id="IPR029040">
    <property type="entry name" value="RPABC4/Spt4"/>
</dbReference>
<dbReference type="PANTHER" id="PTHR12056">
    <property type="entry name" value="DNA-DIRECTED RNA POLYMERASES I, II, AND III"/>
    <property type="match status" value="1"/>
</dbReference>
<dbReference type="PANTHER" id="PTHR12056:SF2">
    <property type="entry name" value="GEO11084P1"/>
    <property type="match status" value="1"/>
</dbReference>
<dbReference type="Pfam" id="PF03604">
    <property type="entry name" value="Zn_ribbon_RPAB4"/>
    <property type="match status" value="1"/>
</dbReference>
<dbReference type="SMART" id="SM00659">
    <property type="entry name" value="RPOLCX"/>
    <property type="match status" value="1"/>
</dbReference>
<dbReference type="SUPFAM" id="SSF63393">
    <property type="entry name" value="RNA polymerase subunits"/>
    <property type="match status" value="1"/>
</dbReference>
<name>RPAB4_YEAST</name>
<reference key="1">
    <citation type="journal article" date="1992" name="Gene Expr.">
        <title>RPC10 encodes a new mini subunit shared by yeast nuclear RNA polymerases.</title>
        <authorList>
            <person name="Treich I."/>
            <person name="Carles C."/>
            <person name="Riva M."/>
            <person name="Sentenac A."/>
        </authorList>
    </citation>
    <scope>NUCLEOTIDE SEQUENCE [GENOMIC DNA]</scope>
    <scope>PROTEIN SEQUENCE OF 4-23 AND 64-70</scope>
    <source>
        <strain>ATCC 204508 / S288c</strain>
    </source>
</reference>
<reference key="2">
    <citation type="journal article" date="1994" name="Science">
        <title>Complete nucleotide sequence of Saccharomyces cerevisiae chromosome VIII.</title>
        <authorList>
            <person name="Johnston M."/>
            <person name="Andrews S."/>
            <person name="Brinkman R."/>
            <person name="Cooper J."/>
            <person name="Ding H."/>
            <person name="Dover J."/>
            <person name="Du Z."/>
            <person name="Favello A."/>
            <person name="Fulton L."/>
            <person name="Gattung S."/>
            <person name="Geisel C."/>
            <person name="Kirsten J."/>
            <person name="Kucaba T."/>
            <person name="Hillier L.W."/>
            <person name="Jier M."/>
            <person name="Johnston L."/>
            <person name="Langston Y."/>
            <person name="Latreille P."/>
            <person name="Louis E.J."/>
            <person name="Macri C."/>
            <person name="Mardis E."/>
            <person name="Menezes S."/>
            <person name="Mouser L."/>
            <person name="Nhan M."/>
            <person name="Rifkin L."/>
            <person name="Riles L."/>
            <person name="St Peter H."/>
            <person name="Trevaskis E."/>
            <person name="Vaughan K."/>
            <person name="Vignati D."/>
            <person name="Wilcox L."/>
            <person name="Wohldman P."/>
            <person name="Waterston R."/>
            <person name="Wilson R."/>
            <person name="Vaudin M."/>
        </authorList>
    </citation>
    <scope>NUCLEOTIDE SEQUENCE [LARGE SCALE GENOMIC DNA]</scope>
    <source>
        <strain>ATCC 204508 / S288c</strain>
    </source>
</reference>
<reference key="3">
    <citation type="journal article" date="2014" name="G3 (Bethesda)">
        <title>The reference genome sequence of Saccharomyces cerevisiae: Then and now.</title>
        <authorList>
            <person name="Engel S.R."/>
            <person name="Dietrich F.S."/>
            <person name="Fisk D.G."/>
            <person name="Binkley G."/>
            <person name="Balakrishnan R."/>
            <person name="Costanzo M.C."/>
            <person name="Dwight S.S."/>
            <person name="Hitz B.C."/>
            <person name="Karra K."/>
            <person name="Nash R.S."/>
            <person name="Weng S."/>
            <person name="Wong E.D."/>
            <person name="Lloyd P."/>
            <person name="Skrzypek M.S."/>
            <person name="Miyasato S.R."/>
            <person name="Simison M."/>
            <person name="Cherry J.M."/>
        </authorList>
    </citation>
    <scope>GENOME REANNOTATION</scope>
    <source>
        <strain>ATCC 204508 / S288c</strain>
    </source>
</reference>
<reference key="4">
    <citation type="journal article" date="2007" name="Genome Res.">
        <title>Approaching a complete repository of sequence-verified protein-encoding clones for Saccharomyces cerevisiae.</title>
        <authorList>
            <person name="Hu Y."/>
            <person name="Rolfs A."/>
            <person name="Bhullar B."/>
            <person name="Murthy T.V.S."/>
            <person name="Zhu C."/>
            <person name="Berger M.F."/>
            <person name="Camargo A.A."/>
            <person name="Kelley F."/>
            <person name="McCarron S."/>
            <person name="Jepson D."/>
            <person name="Richardson A."/>
            <person name="Raphael J."/>
            <person name="Moreira D."/>
            <person name="Taycher E."/>
            <person name="Zuo D."/>
            <person name="Mohr S."/>
            <person name="Kane M.F."/>
            <person name="Williamson J."/>
            <person name="Simpson A.J.G."/>
            <person name="Bulyk M.L."/>
            <person name="Harlow E."/>
            <person name="Marsischky G."/>
            <person name="Kolodner R.D."/>
            <person name="LaBaer J."/>
        </authorList>
    </citation>
    <scope>NUCLEOTIDE SEQUENCE [GENOMIC DNA]</scope>
    <source>
        <strain>ATCC 204508 / S288c</strain>
    </source>
</reference>
<reference key="5">
    <citation type="journal article" date="1998" name="Cold Spring Harb. Symp. Quant. Biol.">
        <title>The yeast RNA polymerase III transcription machinery: a paradigm for eukaryotic gene activation.</title>
        <authorList>
            <person name="Chedin S."/>
            <person name="Ferri M.L."/>
            <person name="Peyroche G."/>
            <person name="Andrau J.-C."/>
            <person name="Jourdain S."/>
            <person name="Lefebvre O."/>
            <person name="Werner M."/>
            <person name="Carles C."/>
            <person name="Sentenac A."/>
        </authorList>
    </citation>
    <scope>REVIEW ON THE RNA POL III COMPLEX</scope>
</reference>
<reference key="6">
    <citation type="journal article" date="1999" name="J. Biol. Chem.">
        <title>Interaction between yeast RNA polymerase III and transcription factor TFIIIC via ABC10alpha and tau131 subunits.</title>
        <authorList>
            <person name="Dumay H."/>
            <person name="Rubbi L."/>
            <person name="Sentenac A."/>
            <person name="Marck C."/>
        </authorList>
    </citation>
    <scope>INTERACTION WITH TFC4</scope>
</reference>
<reference key="7">
    <citation type="journal article" date="2003" name="Nature">
        <title>Global analysis of protein localization in budding yeast.</title>
        <authorList>
            <person name="Huh W.-K."/>
            <person name="Falvo J.V."/>
            <person name="Gerke L.C."/>
            <person name="Carroll A.S."/>
            <person name="Howson R.W."/>
            <person name="Weissman J.S."/>
            <person name="O'Shea E.K."/>
        </authorList>
    </citation>
    <scope>SUBCELLULAR LOCATION [LARGE SCALE ANALYSIS]</scope>
</reference>
<reference key="8">
    <citation type="journal article" date="2003" name="Nature">
        <title>Global analysis of protein expression in yeast.</title>
        <authorList>
            <person name="Ghaemmaghami S."/>
            <person name="Huh W.-K."/>
            <person name="Bower K."/>
            <person name="Howson R.W."/>
            <person name="Belle A."/>
            <person name="Dephoure N."/>
            <person name="O'Shea E.K."/>
            <person name="Weissman J.S."/>
        </authorList>
    </citation>
    <scope>LEVEL OF PROTEIN EXPRESSION [LARGE SCALE ANALYSIS]</scope>
</reference>
<reference key="9">
    <citation type="journal article" date="2022" name="Cells">
        <title>Pls1 Is a Peroxisomal Matrix Protein with a Role in Regulating Lysine Biosynthesis.</title>
        <authorList>
            <person name="David Y."/>
            <person name="Castro I.G."/>
            <person name="Yifrach E."/>
            <person name="Bibi C."/>
            <person name="Katawi E."/>
            <person name="Yahav Har-Shai D."/>
            <person name="Brodsky S."/>
            <person name="Barkai N."/>
            <person name="Ravid T."/>
            <person name="Eisenstein M."/>
            <person name="Pietrokovski S."/>
            <person name="Schuldiner M."/>
            <person name="Zalckvar E."/>
        </authorList>
    </citation>
    <scope>SUBCELLULAR LOCATION</scope>
</reference>
<reference key="10">
    <citation type="journal article" date="2001" name="Science">
        <title>Structural basis of transcription: RNA polymerase II at 2.8 A resolution.</title>
        <authorList>
            <person name="Cramer P."/>
            <person name="Bushnell D.A."/>
            <person name="Kornberg R.D."/>
        </authorList>
    </citation>
    <scope>X-RAY CRYSTALLOGRAPHY (2.8 ANGSTROMS) OF THE RNA POL II CORE COMPLEX</scope>
</reference>
<reference key="11">
    <citation type="journal article" date="2001" name="Science">
        <title>Structural basis of transcription: an RNA polymerase II elongation complex at 3.3 A resolution.</title>
        <authorList>
            <person name="Gnatt A.L."/>
            <person name="Cramer P."/>
            <person name="Fu J."/>
            <person name="Bushnell D.A."/>
            <person name="Kornberg R.D."/>
        </authorList>
    </citation>
    <scope>X-RAY CRYSTALLOGRAPHY (3.3 ANGSTROMS) OF THE RNA POL II CORE COMPLEX</scope>
</reference>
<reference key="12">
    <citation type="journal article" date="2002" name="Proc. Natl. Acad. Sci. U.S.A.">
        <title>Structural basis of transcription: alpha-amanitin-RNA polymerase II cocrystal at 2.8 A resolution.</title>
        <authorList>
            <person name="Bushnell D.A."/>
            <person name="Cramer P."/>
            <person name="Kornberg R.D."/>
        </authorList>
    </citation>
    <scope>X-RAY CRYSTALLOGRAPHY (2.8 ANGSTROMS) OF THE RNA POL II CORE COMPLEX IN COMPLEX WITH ALPHA-AMANITIN</scope>
</reference>
<reference key="13">
    <citation type="journal article" date="2003" name="Cell">
        <title>Architecture of the RNA polymerase II-TFIIS complex and implications for mRNA cleavage.</title>
        <authorList>
            <person name="Kettenberger H."/>
            <person name="Armache K.J."/>
            <person name="Cramer P."/>
        </authorList>
    </citation>
    <scope>X-RAY CRYSTALLOGRAPHY (3.8 ANGSTROMS) OF THE RNA POL II COMPLEX IN COMPLEX WITH DST1</scope>
</reference>
<reference key="14">
    <citation type="journal article" date="2003" name="Mol. Cell">
        <title>RNA polymerase II/TFIIF structure and conserved organization of the initiation complex.</title>
        <authorList>
            <person name="Chung W.H."/>
            <person name="Craighead J.L."/>
            <person name="Chang W.H."/>
            <person name="Ezeokonkwo C."/>
            <person name="Bareket-Samish A."/>
            <person name="Kornberg R.D."/>
            <person name="Asturias F.J."/>
        </authorList>
    </citation>
    <scope>ELECTRON MICROSCOPY OF THE RNA POL II/TFIIF COMPLEX</scope>
</reference>
<reference key="15">
    <citation type="journal article" date="2003" name="Proc. Natl. Acad. Sci. U.S.A.">
        <title>Architecture of initiation-competent 12-subunit RNA polymerase II.</title>
        <authorList>
            <person name="Armache K.J."/>
            <person name="Kettenberger H."/>
            <person name="Cramer P."/>
        </authorList>
    </citation>
    <scope>X-RAY CRYSTALLOGRAPHY (4.2 ANGSTROMS) OF THE RNA POL II COMPLEX</scope>
</reference>
<reference key="16">
    <citation type="journal article" date="2003" name="Proc. Natl. Acad. Sci. U.S.A.">
        <title>Complete, 12-subunit RNA polymerase II at 4.1-A resolution: implications for the initiation of transcription.</title>
        <authorList>
            <person name="Bushnell D.A."/>
            <person name="Kornberg R.D."/>
        </authorList>
    </citation>
    <scope>X-RAY CRYSTALLOGRAPHY (4.1 ANGSTROMS) OF THE RNA POL II CORE COMPLEX</scope>
</reference>
<reference key="17">
    <citation type="journal article" date="2004" name="Cell">
        <title>Structural basis of transcription: nucleotide selection by rotation in the RNA polymerase II active center.</title>
        <authorList>
            <person name="Westover K.D."/>
            <person name="Bushnell D.A."/>
            <person name="Kornberg R.D."/>
        </authorList>
    </citation>
    <scope>X-RAY CRYSTALLOGRAPHY (2.3 ANGSTROMS) OF THE RNA POL II CORE COMPLEX</scope>
</reference>
<reference key="18">
    <citation type="journal article" date="2004" name="Mol. Cell">
        <title>Complete RNA polymerase II elongation complex structure and its interactions with NTP and TFIIS.</title>
        <authorList>
            <person name="Kettenberger H."/>
            <person name="Armache K.J."/>
            <person name="Cramer P."/>
        </authorList>
    </citation>
    <scope>X-RAY CRYSTALLOGRAPHY (4.5 ANGSTROMS)</scope>
</reference>
<reference key="19">
    <citation type="journal article" date="2004" name="Science">
        <title>Structural basis of transcription: an RNA polymerase II-TFIIB cocrystal at 4.5 Angstroms.</title>
        <authorList>
            <person name="Bushnell D.A."/>
            <person name="Westover K.D."/>
            <person name="Davis R.E."/>
            <person name="Kornberg R.D."/>
        </authorList>
    </citation>
    <scope>X-RAY CRYSTALLOGRAPHY (4.5 ANGSTROMS) OF THE RNA POL II CORE COMPLEX</scope>
</reference>
<reference key="20">
    <citation type="journal article" date="2005" name="J. Biol. Chem.">
        <title>Structures of complete RNA polymerase II and its subcomplex, Rpb4/7.</title>
        <authorList>
            <person name="Armache K.J."/>
            <person name="Mitterweger S."/>
            <person name="Meinhart A."/>
            <person name="Cramer P."/>
        </authorList>
    </citation>
    <scope>X-RAY CRYSTALLOGRAPHY (3.8 ANGSTROMS) OF THE RNA POL II COMPLEX</scope>
</reference>
<reference key="21">
    <citation type="journal article" date="2006" name="Mol. Cell">
        <title>Structural biology of RNA polymerase III: subcomplex C17/25 X-ray structure and 11 subunit enzyme model.</title>
        <authorList>
            <person name="Jasiak A.J."/>
            <person name="Armache K.J."/>
            <person name="Martens B."/>
            <person name="Jansen R.P."/>
            <person name="Cramer P."/>
        </authorList>
    </citation>
    <scope>3D-STRUCTURE MODELING OF THE POL III CORE COMPLEX</scope>
</reference>
<reference key="22">
    <citation type="journal article" date="2006" name="Nat. Struct. Mol. Biol.">
        <title>Structure of an RNA polymerase II-RNA inhibitor complex elucidates transcription regulation by noncoding RNAs.</title>
        <authorList>
            <person name="Kettenberger H."/>
            <person name="Eisenfuhr A."/>
            <person name="Brueckner F."/>
            <person name="Theis M."/>
            <person name="Famulok M."/>
            <person name="Cramer P."/>
        </authorList>
    </citation>
    <scope>X-RAY CRYSTALLOGRAPHY (3.8 ANGSTROMS) OF THE RNA POL II COMPLEX IN COMPLEX WITH INHIBITING NON-CODING RNA</scope>
</reference>
<reference key="23">
    <citation type="journal article" date="2006" name="Structure">
        <title>Phasing RNA polymerase II using intrinsically bound Zn atoms: an updated structural model.</title>
        <authorList>
            <person name="Meyer P.A."/>
            <person name="Ye P."/>
            <person name="Zhang M."/>
            <person name="Suh M.H."/>
            <person name="Fu J."/>
        </authorList>
    </citation>
    <scope>X-RAY CRYSTALLOGRAPHY (4.15 ANGSTROMS) OF THE RNA POL II COMPLEX</scope>
</reference>
<reference key="24">
    <citation type="journal article" date="2007" name="Cell">
        <title>Functional architecture of RNA polymerase I.</title>
        <authorList>
            <person name="Kuhn C.D."/>
            <person name="Geiger S.R."/>
            <person name="Baumli S."/>
            <person name="Gartmann M."/>
            <person name="Gerber J."/>
            <person name="Jennebach S."/>
            <person name="Mielke T."/>
            <person name="Tschochner H."/>
            <person name="Beckmann R."/>
            <person name="Cramer P."/>
        </authorList>
    </citation>
    <scope>STRUCTURE BY ELECTRON MICROSCOPY (12.00 ANGSTROMS) OF THE POL I COMPLEX</scope>
    <scope>FUNCTION</scope>
    <scope>SUBUNIT</scope>
</reference>
<reference key="25">
    <citation type="journal article" date="2013" name="Nature">
        <title>Crystal structure of the 14-subunit RNA polymerase I.</title>
        <authorList>
            <person name="Fernandez-Tornero C."/>
            <person name="Moreno-Morcillo M."/>
            <person name="Rashid U.J."/>
            <person name="Taylor N.M."/>
            <person name="Ruiz F.M."/>
            <person name="Gruene T."/>
            <person name="Legrand P."/>
            <person name="Steuerwald U."/>
            <person name="Muller C.W."/>
        </authorList>
    </citation>
    <scope>X-RAY CRYSTALLOGRAPHY (3.0 ANGSTROMS) OF THE POL I COMPLEX</scope>
    <scope>FUNCTION</scope>
    <scope>SUBUNIT</scope>
</reference>
<reference key="26">
    <citation type="journal article" date="2013" name="Nature">
        <title>RNA polymerase I structure and transcription regulation.</title>
        <authorList>
            <person name="Engel C."/>
            <person name="Sainsbury S."/>
            <person name="Cheung A.C."/>
            <person name="Kostrewa D."/>
            <person name="Cramer P."/>
        </authorList>
    </citation>
    <scope>X-RAY CRYSTALLOGRAPHY (2.8 ANGSTROMS) OF THE POL I COMPLEX</scope>
    <scope>FUNCTION</scope>
    <scope>SUBUNIT</scope>
</reference>
<feature type="chain" id="PRO_0000159753" description="DNA-directed RNA polymerases I, II, and III subunit RPABC4">
    <location>
        <begin position="1"/>
        <end position="70"/>
    </location>
</feature>
<feature type="zinc finger region" description="C4-type">
    <location>
        <begin position="31"/>
        <end position="51"/>
    </location>
</feature>
<feature type="binding site">
    <location>
        <position position="31"/>
    </location>
    <ligand>
        <name>Zn(2+)</name>
        <dbReference type="ChEBI" id="CHEBI:29105"/>
    </ligand>
</feature>
<feature type="binding site">
    <location>
        <position position="34"/>
    </location>
    <ligand>
        <name>Zn(2+)</name>
        <dbReference type="ChEBI" id="CHEBI:29105"/>
    </ligand>
</feature>
<feature type="binding site">
    <location>
        <position position="48"/>
    </location>
    <ligand>
        <name>Zn(2+)</name>
        <dbReference type="ChEBI" id="CHEBI:29105"/>
    </ligand>
</feature>
<feature type="binding site">
    <location>
        <position position="51"/>
    </location>
    <ligand>
        <name>Zn(2+)</name>
        <dbReference type="ChEBI" id="CHEBI:29105"/>
    </ligand>
</feature>
<feature type="strand" evidence="14">
    <location>
        <begin position="29"/>
        <end position="31"/>
    </location>
</feature>
<feature type="strand" evidence="12">
    <location>
        <begin position="32"/>
        <end position="34"/>
    </location>
</feature>
<feature type="strand" evidence="15">
    <location>
        <begin position="37"/>
        <end position="39"/>
    </location>
</feature>
<feature type="strand" evidence="16">
    <location>
        <begin position="42"/>
        <end position="44"/>
    </location>
</feature>
<feature type="strand" evidence="13">
    <location>
        <begin position="46"/>
        <end position="48"/>
    </location>
</feature>
<feature type="strand" evidence="12">
    <location>
        <begin position="49"/>
        <end position="51"/>
    </location>
</feature>
<feature type="strand" evidence="14">
    <location>
        <begin position="54"/>
        <end position="58"/>
    </location>
</feature>
<feature type="strand" evidence="12">
    <location>
        <begin position="65"/>
        <end position="67"/>
    </location>
</feature>